<sequence>MARIAGINIPDHKHAVIALTSIYGVGKTRSKAILAAAGIAEDVKISELSEGQIDTLRDEVAKFVVEGDLRREISMSIKRLMDLGCYRGLRHRRGLPVRGQRTKTNARTRKGPRKPIKK</sequence>
<feature type="initiator methionine" description="Removed" evidence="12">
    <location>
        <position position="1"/>
    </location>
</feature>
<feature type="chain" id="PRO_0000132089" description="Small ribosomal subunit protein uS13">
    <location>
        <begin position="2"/>
        <end position="118"/>
    </location>
</feature>
<feature type="region of interest" description="Disordered" evidence="1">
    <location>
        <begin position="94"/>
        <end position="118"/>
    </location>
</feature>
<feature type="sequence variant" description="In PW118; partially suppresses a rimM deletion." evidence="15">
    <location>
        <begin position="89"/>
        <end position="99"/>
    </location>
</feature>
<feature type="sequence variant" description="In rpsM413; pseudorevertant of streptomycin resistance. A strong antisuppressor of two tRNA suppressors, decreases translation step time and growth rate." evidence="13">
    <location>
        <begin position="100"/>
        <end position="118"/>
    </location>
</feature>
<feature type="sequence variant" description="In PW095; partially suppresses a rimM deletion." evidence="15">
    <original>N</original>
    <variation>H</variation>
    <location>
        <position position="105"/>
    </location>
</feature>
<feature type="sequence variant" description="In PW097; partially suppresses a rimM deletion." evidence="15">
    <original>N</original>
    <variation>K</variation>
    <location>
        <position position="105"/>
    </location>
</feature>
<feature type="mutagenesis site" description="Decreased growth rate at all temperatures. Decreased affinity of the 30S subunit P site for tRNA in vitro." evidence="6">
    <location>
        <begin position="83"/>
        <end position="118"/>
    </location>
</feature>
<feature type="mutagenesis site" description="Decreased growth rate at all temperatures. Decreased affinity of the 30S subunit P site for tRNA in vitro." evidence="6">
    <location>
        <begin position="114"/>
        <end position="118"/>
    </location>
</feature>
<feature type="strand" evidence="18">
    <location>
        <begin position="4"/>
        <end position="7"/>
    </location>
</feature>
<feature type="strand" evidence="19">
    <location>
        <begin position="11"/>
        <end position="14"/>
    </location>
</feature>
<feature type="helix" evidence="19">
    <location>
        <begin position="15"/>
        <end position="18"/>
    </location>
</feature>
<feature type="helix" evidence="19">
    <location>
        <begin position="19"/>
        <end position="21"/>
    </location>
</feature>
<feature type="strand" evidence="18">
    <location>
        <begin position="23"/>
        <end position="25"/>
    </location>
</feature>
<feature type="helix" evidence="19">
    <location>
        <begin position="27"/>
        <end position="37"/>
    </location>
</feature>
<feature type="strand" evidence="19">
    <location>
        <begin position="43"/>
        <end position="45"/>
    </location>
</feature>
<feature type="helix" evidence="19">
    <location>
        <begin position="50"/>
        <end position="60"/>
    </location>
</feature>
<feature type="helix" evidence="19">
    <location>
        <begin position="66"/>
        <end position="83"/>
    </location>
</feature>
<feature type="helix" evidence="19">
    <location>
        <begin position="86"/>
        <end position="93"/>
    </location>
</feature>
<feature type="strand" evidence="19">
    <location>
        <begin position="97"/>
        <end position="99"/>
    </location>
</feature>
<feature type="strand" evidence="18">
    <location>
        <begin position="103"/>
        <end position="105"/>
    </location>
</feature>
<feature type="helix" evidence="19">
    <location>
        <begin position="107"/>
        <end position="110"/>
    </location>
</feature>
<proteinExistence type="evidence at protein level"/>
<evidence type="ECO:0000256" key="1">
    <source>
        <dbReference type="SAM" id="MobiDB-lite"/>
    </source>
</evidence>
<evidence type="ECO:0000269" key="2">
    <source>
    </source>
</evidence>
<evidence type="ECO:0000269" key="3">
    <source>
    </source>
</evidence>
<evidence type="ECO:0000269" key="4">
    <source>
    </source>
</evidence>
<evidence type="ECO:0000269" key="5">
    <source>
    </source>
</evidence>
<evidence type="ECO:0000269" key="6">
    <source>
    </source>
</evidence>
<evidence type="ECO:0000269" key="7">
    <source>
    </source>
</evidence>
<evidence type="ECO:0000269" key="8">
    <source>
    </source>
</evidence>
<evidence type="ECO:0000269" key="9">
    <source>
    </source>
</evidence>
<evidence type="ECO:0000269" key="10">
    <source>
    </source>
</evidence>
<evidence type="ECO:0000269" key="11">
    <source>
    </source>
</evidence>
<evidence type="ECO:0000269" key="12">
    <source>
    </source>
</evidence>
<evidence type="ECO:0000269" key="13">
    <source>
    </source>
</evidence>
<evidence type="ECO:0000269" key="14">
    <source>
    </source>
</evidence>
<evidence type="ECO:0000269" key="15">
    <source>
    </source>
</evidence>
<evidence type="ECO:0000303" key="16">
    <source>
    </source>
</evidence>
<evidence type="ECO:0000305" key="17"/>
<evidence type="ECO:0007829" key="18">
    <source>
        <dbReference type="PDB" id="7OE0"/>
    </source>
</evidence>
<evidence type="ECO:0007829" key="19">
    <source>
        <dbReference type="PDB" id="8CF1"/>
    </source>
</evidence>
<name>RS13_ECOLI</name>
<gene>
    <name type="primary">rpsM</name>
    <name type="ordered locus">b3298</name>
    <name type="ordered locus">JW3260</name>
</gene>
<keyword id="KW-0002">3D-structure</keyword>
<keyword id="KW-0903">Direct protein sequencing</keyword>
<keyword id="KW-1185">Reference proteome</keyword>
<keyword id="KW-0687">Ribonucleoprotein</keyword>
<keyword id="KW-0689">Ribosomal protein</keyword>
<keyword id="KW-0694">RNA-binding</keyword>
<keyword id="KW-0699">rRNA-binding</keyword>
<keyword id="KW-0820">tRNA-binding</keyword>
<reference key="1">
    <citation type="journal article" date="1985" name="Nucleic Acids Res.">
        <title>Nucleotide sequence of the alpha ribosomal protein operon of Escherichia coli.</title>
        <authorList>
            <person name="Bedwell D.M."/>
            <person name="Davis G.R."/>
            <person name="Gosink M."/>
            <person name="Post L.E."/>
            <person name="Nomura M."/>
            <person name="Kestler H."/>
            <person name="Zengel J.M."/>
            <person name="Lindahl L."/>
        </authorList>
    </citation>
    <scope>NUCLEOTIDE SEQUENCE [GENOMIC DNA]</scope>
    <source>
        <strain>K12</strain>
    </source>
</reference>
<reference key="2">
    <citation type="journal article" date="1997" name="Science">
        <title>The complete genome sequence of Escherichia coli K-12.</title>
        <authorList>
            <person name="Blattner F.R."/>
            <person name="Plunkett G. III"/>
            <person name="Bloch C.A."/>
            <person name="Perna N.T."/>
            <person name="Burland V."/>
            <person name="Riley M."/>
            <person name="Collado-Vides J."/>
            <person name="Glasner J.D."/>
            <person name="Rode C.K."/>
            <person name="Mayhew G.F."/>
            <person name="Gregor J."/>
            <person name="Davis N.W."/>
            <person name="Kirkpatrick H.A."/>
            <person name="Goeden M.A."/>
            <person name="Rose D.J."/>
            <person name="Mau B."/>
            <person name="Shao Y."/>
        </authorList>
    </citation>
    <scope>NUCLEOTIDE SEQUENCE [LARGE SCALE GENOMIC DNA]</scope>
    <source>
        <strain>K12 / MG1655 / ATCC 47076</strain>
    </source>
</reference>
<reference key="3">
    <citation type="journal article" date="2006" name="Mol. Syst. Biol.">
        <title>Highly accurate genome sequences of Escherichia coli K-12 strains MG1655 and W3110.</title>
        <authorList>
            <person name="Hayashi K."/>
            <person name="Morooka N."/>
            <person name="Yamamoto Y."/>
            <person name="Fujita K."/>
            <person name="Isono K."/>
            <person name="Choi S."/>
            <person name="Ohtsubo E."/>
            <person name="Baba T."/>
            <person name="Wanner B.L."/>
            <person name="Mori H."/>
            <person name="Horiuchi T."/>
        </authorList>
    </citation>
    <scope>NUCLEOTIDE SEQUENCE [LARGE SCALE GENOMIC DNA]</scope>
    <source>
        <strain>K12 / W3110 / ATCC 27325 / DSM 5911</strain>
    </source>
</reference>
<reference key="4">
    <citation type="journal article" date="1977" name="Hoppe-Seyler's Z. Physiol. Chem.">
        <title>Primary structure of protein S13 from the small subunit of Escherichia coli ribosomes.</title>
        <authorList>
            <person name="Lindemann H."/>
            <person name="Wittmann-Liebold B."/>
        </authorList>
    </citation>
    <scope>PROTEIN SEQUENCE OF 2-118</scope>
    <scope>SUBUNIT</scope>
    <source>
        <strain>K</strain>
    </source>
</reference>
<reference key="5">
    <citation type="journal article" date="1980" name="J. Biol. Chem.">
        <title>DNA sequence of the promoter region for the alpha ribosomal protein operon in Escherichia coli.</title>
        <authorList>
            <person name="Post L.E."/>
            <person name="Arfsten A.E."/>
            <person name="Davis G.R."/>
            <person name="Nomura M."/>
        </authorList>
    </citation>
    <scope>NUCLEOTIDE SEQUENCE [GENOMIC DNA] OF 1-36</scope>
</reference>
<reference key="6">
    <citation type="journal article" date="1981" name="Cell">
        <title>Growth-rate-dependent regulation of ribosome synthesis in E. coli: expression of the lacZ and galK genes fused to ribosomal promoters.</title>
        <authorList>
            <person name="Miura A."/>
            <person name="Krueger J.H."/>
            <person name="Itoh S."/>
            <person name="de Boer H.A."/>
            <person name="Nomura M."/>
        </authorList>
    </citation>
    <scope>NUCLEOTIDE SEQUENCE [GENOMIC DNA] OF 1-36</scope>
</reference>
<reference key="7">
    <citation type="journal article" date="1988" name="J. Biol. Chem.">
        <title>Identification of a cross-link in the Escherichia coli ribosomal protein pair S13-S19 at the amino acid level.</title>
        <authorList>
            <person name="Pohl T."/>
            <person name="Wittmann-Liebold B."/>
        </authorList>
    </citation>
    <scope>PROTEIN SEQUENCE OF 83-85</scope>
    <scope>CROSS-LINKING TO S19</scope>
    <scope>SUBUNIT</scope>
    <source>
        <strain>K12 / A19</strain>
    </source>
</reference>
<reference key="8">
    <citation type="journal article" date="2014" name="Curr. Opin. Struct. Biol.">
        <title>A new system for naming ribosomal proteins.</title>
        <authorList>
            <person name="Ban N."/>
            <person name="Beckmann R."/>
            <person name="Cate J.H.D."/>
            <person name="Dinman J.D."/>
            <person name="Dragon F."/>
            <person name="Ellis S.R."/>
            <person name="Lafontaine D.L.J."/>
            <person name="Lindahl L."/>
            <person name="Liljas A."/>
            <person name="Lipton J.M."/>
            <person name="McAlear M.A."/>
            <person name="Moore P.B."/>
            <person name="Noller H.F."/>
            <person name="Ortega J."/>
            <person name="Panse V.G."/>
            <person name="Ramakrishnan V."/>
            <person name="Spahn C.M.T."/>
            <person name="Steitz T.A."/>
            <person name="Tchorzewski M."/>
            <person name="Tollervey D."/>
            <person name="Warren A.J."/>
            <person name="Williamson J.R."/>
            <person name="Wilson D."/>
            <person name="Yonath A."/>
            <person name="Yusupov M."/>
        </authorList>
    </citation>
    <scope>NOMENCLATURE</scope>
</reference>
<reference key="9">
    <citation type="journal article" date="1994" name="Biochim. Biophys. Acta">
        <title>Antisuppression by a mutation in rpsM(S13) giving a shortened ribosomal protein S13.</title>
        <authorList>
            <person name="Faxen M."/>
            <person name="Walles-Granberg A."/>
            <person name="Isaksson L.A."/>
        </authorList>
    </citation>
    <scope>CHARACTERIZATION OF VARIANT RPSM413</scope>
    <source>
        <strain>K12</strain>
    </source>
</reference>
<reference key="10">
    <citation type="journal article" date="1995" name="Nucleic Acids Res.">
        <title>The ribosomal neighbourhood of the central fold of tRNA: cross-links from position 47 of tRNA located at the A, P or E site.</title>
        <authorList>
            <person name="Osswald M."/>
            <person name="Doering T."/>
            <person name="Brimacombe R."/>
        </authorList>
    </citation>
    <scope>CROSS-LINKING TO THE TRNA CENTRAL FOLD</scope>
    <scope>SUBUNIT</scope>
    <source>
        <strain>MRE-600</strain>
    </source>
</reference>
<reference key="11">
    <citation type="journal article" date="1997" name="J. Bacteriol.">
        <title>A novel ribosome-associated protein is important for efficient translation in Escherichia coli.</title>
        <authorList>
            <person name="Bylund G.O."/>
            <person name="Persson B.C."/>
            <person name="Lundberg L.A."/>
            <person name="Wikstroem P.M."/>
        </authorList>
    </citation>
    <scope>ABILITY OF VARIANTS PW118; PW097 AND PW095 TO PARTIALLY SUPPRESS A RIMM DELETION</scope>
    <source>
        <strain>MW100</strain>
    </source>
</reference>
<reference key="12">
    <citation type="journal article" date="2004" name="Proc. Natl. Acad. Sci. U.S.A.">
        <title>Creating ribosomes with an all-RNA 30S subunit P site.</title>
        <authorList>
            <person name="Hoang L."/>
            <person name="Fredrick K."/>
            <person name="Noller H.F."/>
        </authorList>
    </citation>
    <scope>ROLE IN P SITE TRNA-BINDING</scope>
    <scope>MUTAGENESIS OF 83-LEU--LYS-118 AND 114-LYS--LYS-118</scope>
    <source>
        <strain>CSH142</strain>
    </source>
</reference>
<reference key="13">
    <citation type="journal article" date="1999" name="Anal. Biochem.">
        <title>Observation of Escherichia coli ribosomal proteins and their posttranslational modifications by mass spectrometry.</title>
        <authorList>
            <person name="Arnold R.J."/>
            <person name="Reilly J.P."/>
        </authorList>
    </citation>
    <scope>MASS SPECTROMETRY</scope>
    <scope>SUBUNIT</scope>
    <source>
        <strain>K12 / ATCC 25404 / DSM 5698 / NCIMB 11290</strain>
    </source>
</reference>
<reference key="14">
    <citation type="journal article" date="2002" name="Nat. Struct. Biol.">
        <title>All-atom homology model of the Escherichia coli 30S ribosomal subunit.</title>
        <authorList>
            <person name="Tung C.-S."/>
            <person name="Joseph S."/>
            <person name="Sanbonmatsu K.Y."/>
        </authorList>
    </citation>
    <scope>3D-STRUCTURE MODELING</scope>
    <scope>SUBUNIT</scope>
</reference>
<reference key="15">
    <citation type="journal article" date="2003" name="Cell">
        <title>Study of the structural dynamics of the E. coli 70S ribosome using real-space refinement.</title>
        <authorList>
            <person name="Gao H."/>
            <person name="Sengupta J."/>
            <person name="Valle M."/>
            <person name="Korostelev A."/>
            <person name="Eswar N."/>
            <person name="Stagg S.M."/>
            <person name="Van Roey P."/>
            <person name="Agrawal R.K."/>
            <person name="Harvey S.C."/>
            <person name="Sali A."/>
            <person name="Chapman M.S."/>
            <person name="Frank J."/>
        </authorList>
    </citation>
    <scope>STRUCTURE BY ELECTRON MICROSCOPY (11.50 ANGSTROMS)</scope>
    <scope>SUBUNIT</scope>
    <scope>INTERSUBUNIT BRIDGE FORMATION</scope>
    <source>
        <strain>MRE-600</strain>
    </source>
</reference>
<reference key="16">
    <citation type="journal article" date="2005" name="Science">
        <title>Structures of the bacterial ribosome at 3.5 A resolution.</title>
        <authorList>
            <person name="Schuwirth B.S."/>
            <person name="Borovinskaya M.A."/>
            <person name="Hau C.W."/>
            <person name="Zhang W."/>
            <person name="Vila-Sanjurjo A."/>
            <person name="Holton J.M."/>
            <person name="Cate J.H.D."/>
        </authorList>
    </citation>
    <scope>X-RAY CRYSTALLOGRAPHY (3.46 ANGSTROMS) OF 2 DIFFERENT RIBOSOME STRUCTURES INCLUDING THE INTERSUBUNIT BRIDGE B1B</scope>
    <scope>SUBUNIT</scope>
    <source>
        <strain>MRE-600</strain>
    </source>
</reference>
<reference key="17">
    <citation type="journal article" date="2003" name="Cell">
        <title>Locking and unlocking of ribosomal motions.</title>
        <authorList>
            <person name="Valle M."/>
            <person name="Zavialov A."/>
            <person name="Sengupta J."/>
            <person name="Rawat U."/>
            <person name="Ehrenberg M."/>
            <person name="Frank J."/>
        </authorList>
    </citation>
    <scope>3D-STRUCTURE MODELING OF RIBOSOMAL COMPLEXES INCLUDING BRIDGE CHANGES UPON TRANSLOCATION</scope>
    <scope>SUBUNIT</scope>
</reference>
<reference key="18">
    <citation type="journal article" date="2017" name="Nature">
        <title>Mechanistic insights into the alternative translation termination by ArfA and RF2.</title>
        <authorList>
            <person name="Ma C."/>
            <person name="Kurita D."/>
            <person name="Li N."/>
            <person name="Chen Y."/>
            <person name="Himeno H."/>
            <person name="Gao N."/>
        </authorList>
    </citation>
    <scope>STRUCTURE BY ELECTRON MICROSCOPY (3.0 ANGSTROMS) OF 70S RIBOSOME IN COMPLEX WITH ARFA AND RF2</scope>
    <scope>SUBUNIT</scope>
</reference>
<reference key="19">
    <citation type="journal article" date="2017" name="Nature">
        <title>Structural basis for ArfA-RF2-mediated translation termination on mRNAs lacking stop codons.</title>
        <authorList>
            <person name="Huter P."/>
            <person name="Mueller C."/>
            <person name="Beckert B."/>
            <person name="Arenz S."/>
            <person name="Berninghausen O."/>
            <person name="Beckmann R."/>
            <person name="Wilson D.N."/>
        </authorList>
    </citation>
    <scope>STRUCTURE BY ELECTRON MICROSCOPY (3.1 ANGSTROMS) OF 70S RIBOSOME IN COMPLEX WITH ARFA AND RF2</scope>
    <scope>SUBUNIT</scope>
</reference>
<reference key="20">
    <citation type="journal article" date="2016" name="Science">
        <title>Translational termination without a stop codon.</title>
        <authorList>
            <person name="James N.R."/>
            <person name="Brown A."/>
            <person name="Gordiyenko Y."/>
            <person name="Ramakrishnan V."/>
        </authorList>
    </citation>
    <scope>STRUCTURE BY ELECTRON MICROSCOPY (2.97 ANGSTROMS) OF 70S RIBOSOME IN COMPLEX WITH ARFA AND RF2</scope>
    <scope>SUBUNIT</scope>
</reference>
<reference key="21">
    <citation type="journal article" date="2017" name="Nature">
        <title>Structural basis of co-translational quality control by ArfA and RF2 bound to ribosome.</title>
        <authorList>
            <person name="Zeng F."/>
            <person name="Chen Y."/>
            <person name="Remis J."/>
            <person name="Shekhar M."/>
            <person name="Phillips J.C."/>
            <person name="Tajkhorshid E."/>
            <person name="Jin H."/>
        </authorList>
    </citation>
    <scope>STRUCTURE BY ELECTRON MICROSCOPY (3.52 ANGSTROMS) OF 70S RIBOSOME IN COMPLEX WITH ARFA AND RF2</scope>
    <scope>SUBUNIT</scope>
</reference>
<protein>
    <recommendedName>
        <fullName evidence="16">Small ribosomal subunit protein uS13</fullName>
    </recommendedName>
    <alternativeName>
        <fullName>30S ribosomal protein S13</fullName>
    </alternativeName>
</protein>
<dbReference type="EMBL" id="X02543">
    <property type="protein sequence ID" value="CAA26392.1"/>
    <property type="molecule type" value="Genomic_DNA"/>
</dbReference>
<dbReference type="EMBL" id="U18997">
    <property type="protein sequence ID" value="AAA58093.1"/>
    <property type="molecule type" value="Genomic_DNA"/>
</dbReference>
<dbReference type="EMBL" id="U00096">
    <property type="protein sequence ID" value="AAC76323.1"/>
    <property type="molecule type" value="Genomic_DNA"/>
</dbReference>
<dbReference type="EMBL" id="AP009048">
    <property type="protein sequence ID" value="BAE77993.1"/>
    <property type="molecule type" value="Genomic_DNA"/>
</dbReference>
<dbReference type="EMBL" id="AH003257">
    <property type="protein sequence ID" value="AAA83903.1"/>
    <property type="molecule type" value="Genomic_DNA"/>
</dbReference>
<dbReference type="EMBL" id="M10213">
    <property type="protein sequence ID" value="AAA72457.1"/>
    <property type="molecule type" value="Genomic_DNA"/>
</dbReference>
<dbReference type="PIR" id="A23807">
    <property type="entry name" value="R3EC13"/>
</dbReference>
<dbReference type="RefSeq" id="NP_417757.1">
    <property type="nucleotide sequence ID" value="NC_000913.3"/>
</dbReference>
<dbReference type="RefSeq" id="WP_000090775.1">
    <property type="nucleotide sequence ID" value="NZ_STEB01000038.1"/>
</dbReference>
<dbReference type="PDB" id="2YKR">
    <property type="method" value="EM"/>
    <property type="resolution" value="9.80 A"/>
    <property type="chains" value="M=2-115"/>
</dbReference>
<dbReference type="PDB" id="3J9Y">
    <property type="method" value="EM"/>
    <property type="resolution" value="3.90 A"/>
    <property type="chains" value="m=1-118"/>
</dbReference>
<dbReference type="PDB" id="3J9Z">
    <property type="method" value="EM"/>
    <property type="resolution" value="3.60 A"/>
    <property type="chains" value="SM=2-118"/>
</dbReference>
<dbReference type="PDB" id="3JA1">
    <property type="method" value="EM"/>
    <property type="resolution" value="3.60 A"/>
    <property type="chains" value="SM=2-118"/>
</dbReference>
<dbReference type="PDB" id="3JBU">
    <property type="method" value="EM"/>
    <property type="resolution" value="3.64 A"/>
    <property type="chains" value="M=1-118"/>
</dbReference>
<dbReference type="PDB" id="3JBV">
    <property type="method" value="EM"/>
    <property type="resolution" value="3.32 A"/>
    <property type="chains" value="M=1-118"/>
</dbReference>
<dbReference type="PDB" id="3JCD">
    <property type="method" value="EM"/>
    <property type="resolution" value="3.70 A"/>
    <property type="chains" value="m=1-118"/>
</dbReference>
<dbReference type="PDB" id="3JCE">
    <property type="method" value="EM"/>
    <property type="resolution" value="3.20 A"/>
    <property type="chains" value="m=1-118"/>
</dbReference>
<dbReference type="PDB" id="3JCJ">
    <property type="method" value="EM"/>
    <property type="resolution" value="3.70 A"/>
    <property type="chains" value="s=1-118"/>
</dbReference>
<dbReference type="PDB" id="3JCN">
    <property type="method" value="EM"/>
    <property type="resolution" value="4.60 A"/>
    <property type="chains" value="n=1-118"/>
</dbReference>
<dbReference type="PDB" id="4A2I">
    <property type="method" value="EM"/>
    <property type="resolution" value="16.50 A"/>
    <property type="chains" value="M=2-115"/>
</dbReference>
<dbReference type="PDB" id="4ADV">
    <property type="method" value="EM"/>
    <property type="resolution" value="13.50 A"/>
    <property type="chains" value="M=2-118"/>
</dbReference>
<dbReference type="PDB" id="4U1U">
    <property type="method" value="X-ray"/>
    <property type="resolution" value="2.95 A"/>
    <property type="chains" value="AM/CM=2-115"/>
</dbReference>
<dbReference type="PDB" id="4U1V">
    <property type="method" value="X-ray"/>
    <property type="resolution" value="3.00 A"/>
    <property type="chains" value="AM/CM=2-115"/>
</dbReference>
<dbReference type="PDB" id="4U20">
    <property type="method" value="X-ray"/>
    <property type="resolution" value="2.90 A"/>
    <property type="chains" value="AM/CM=2-115"/>
</dbReference>
<dbReference type="PDB" id="4U24">
    <property type="method" value="X-ray"/>
    <property type="resolution" value="2.90 A"/>
    <property type="chains" value="AM/CM=2-115"/>
</dbReference>
<dbReference type="PDB" id="4U25">
    <property type="method" value="X-ray"/>
    <property type="resolution" value="2.90 A"/>
    <property type="chains" value="AM/CM=2-115"/>
</dbReference>
<dbReference type="PDB" id="4U26">
    <property type="method" value="X-ray"/>
    <property type="resolution" value="2.80 A"/>
    <property type="chains" value="AM/CM=2-115"/>
</dbReference>
<dbReference type="PDB" id="4U27">
    <property type="method" value="X-ray"/>
    <property type="resolution" value="2.80 A"/>
    <property type="chains" value="AM/CM=2-115"/>
</dbReference>
<dbReference type="PDB" id="4V47">
    <property type="method" value="EM"/>
    <property type="resolution" value="12.30 A"/>
    <property type="chains" value="BM=2-118"/>
</dbReference>
<dbReference type="PDB" id="4V48">
    <property type="method" value="EM"/>
    <property type="resolution" value="11.50 A"/>
    <property type="chains" value="BM=2-118"/>
</dbReference>
<dbReference type="PDB" id="4V4H">
    <property type="method" value="X-ray"/>
    <property type="resolution" value="3.46 A"/>
    <property type="chains" value="AM/CM=1-118"/>
</dbReference>
<dbReference type="PDB" id="4V4Q">
    <property type="method" value="X-ray"/>
    <property type="resolution" value="3.46 A"/>
    <property type="chains" value="AM/CM=2-118"/>
</dbReference>
<dbReference type="PDB" id="4V4V">
    <property type="method" value="EM"/>
    <property type="resolution" value="15.00 A"/>
    <property type="chains" value="AM=2-116"/>
</dbReference>
<dbReference type="PDB" id="4V4W">
    <property type="method" value="EM"/>
    <property type="resolution" value="15.00 A"/>
    <property type="chains" value="AM=2-116"/>
</dbReference>
<dbReference type="PDB" id="4V50">
    <property type="method" value="X-ray"/>
    <property type="resolution" value="3.22 A"/>
    <property type="chains" value="AM/CM=2-118"/>
</dbReference>
<dbReference type="PDB" id="4V52">
    <property type="method" value="X-ray"/>
    <property type="resolution" value="3.21 A"/>
    <property type="chains" value="AM/CM=2-118"/>
</dbReference>
<dbReference type="PDB" id="4V53">
    <property type="method" value="X-ray"/>
    <property type="resolution" value="3.54 A"/>
    <property type="chains" value="AM/CM=2-118"/>
</dbReference>
<dbReference type="PDB" id="4V54">
    <property type="method" value="X-ray"/>
    <property type="resolution" value="3.30 A"/>
    <property type="chains" value="AM/CM=2-118"/>
</dbReference>
<dbReference type="PDB" id="4V55">
    <property type="method" value="X-ray"/>
    <property type="resolution" value="4.00 A"/>
    <property type="chains" value="AM/CM=2-118"/>
</dbReference>
<dbReference type="PDB" id="4V56">
    <property type="method" value="X-ray"/>
    <property type="resolution" value="3.93 A"/>
    <property type="chains" value="AM/CM=2-118"/>
</dbReference>
<dbReference type="PDB" id="4V57">
    <property type="method" value="X-ray"/>
    <property type="resolution" value="3.50 A"/>
    <property type="chains" value="AM/CM=2-118"/>
</dbReference>
<dbReference type="PDB" id="4V5B">
    <property type="method" value="X-ray"/>
    <property type="resolution" value="3.74 A"/>
    <property type="chains" value="BM/DM=2-118"/>
</dbReference>
<dbReference type="PDB" id="4V5H">
    <property type="method" value="EM"/>
    <property type="resolution" value="5.80 A"/>
    <property type="chains" value="AM=2-114"/>
</dbReference>
<dbReference type="PDB" id="4V5Y">
    <property type="method" value="X-ray"/>
    <property type="resolution" value="4.45 A"/>
    <property type="chains" value="AM/CM=2-118"/>
</dbReference>
<dbReference type="PDB" id="4V64">
    <property type="method" value="X-ray"/>
    <property type="resolution" value="3.50 A"/>
    <property type="chains" value="AM/CM=2-118"/>
</dbReference>
<dbReference type="PDB" id="4V65">
    <property type="method" value="EM"/>
    <property type="resolution" value="9.00 A"/>
    <property type="chains" value="AF=1-118"/>
</dbReference>
<dbReference type="PDB" id="4V66">
    <property type="method" value="EM"/>
    <property type="resolution" value="9.00 A"/>
    <property type="chains" value="AF=1-118"/>
</dbReference>
<dbReference type="PDB" id="4V69">
    <property type="method" value="EM"/>
    <property type="resolution" value="6.70 A"/>
    <property type="chains" value="AM=2-114"/>
</dbReference>
<dbReference type="PDB" id="4V6C">
    <property type="method" value="X-ray"/>
    <property type="resolution" value="3.19 A"/>
    <property type="chains" value="AM/CM=1-118"/>
</dbReference>
<dbReference type="PDB" id="4V6D">
    <property type="method" value="X-ray"/>
    <property type="resolution" value="3.81 A"/>
    <property type="chains" value="AM/CM=1-118"/>
</dbReference>
<dbReference type="PDB" id="4V6E">
    <property type="method" value="X-ray"/>
    <property type="resolution" value="3.71 A"/>
    <property type="chains" value="AM/CM=1-118"/>
</dbReference>
<dbReference type="PDB" id="4V6K">
    <property type="method" value="EM"/>
    <property type="resolution" value="8.25 A"/>
    <property type="chains" value="BQ=1-118"/>
</dbReference>
<dbReference type="PDB" id="4V6L">
    <property type="method" value="EM"/>
    <property type="resolution" value="13.20 A"/>
    <property type="chains" value="AQ=1-118"/>
</dbReference>
<dbReference type="PDB" id="4V6N">
    <property type="method" value="EM"/>
    <property type="resolution" value="12.10 A"/>
    <property type="chains" value="BP=2-118"/>
</dbReference>
<dbReference type="PDB" id="4V6O">
    <property type="method" value="EM"/>
    <property type="resolution" value="14.70 A"/>
    <property type="chains" value="AP=2-118"/>
</dbReference>
<dbReference type="PDB" id="4V6P">
    <property type="method" value="EM"/>
    <property type="resolution" value="13.50 A"/>
    <property type="chains" value="AP=2-118"/>
</dbReference>
<dbReference type="PDB" id="4V6Q">
    <property type="method" value="EM"/>
    <property type="resolution" value="11.50 A"/>
    <property type="chains" value="AP=2-118"/>
</dbReference>
<dbReference type="PDB" id="4V6R">
    <property type="method" value="EM"/>
    <property type="resolution" value="11.50 A"/>
    <property type="chains" value="AP=2-118"/>
</dbReference>
<dbReference type="PDB" id="4V6S">
    <property type="method" value="EM"/>
    <property type="resolution" value="13.10 A"/>
    <property type="chains" value="BO=2-118"/>
</dbReference>
<dbReference type="PDB" id="4V6T">
    <property type="method" value="EM"/>
    <property type="resolution" value="8.30 A"/>
    <property type="chains" value="AM=2-115"/>
</dbReference>
<dbReference type="PDB" id="4V6V">
    <property type="method" value="EM"/>
    <property type="resolution" value="9.80 A"/>
    <property type="chains" value="AM=2-118"/>
</dbReference>
<dbReference type="PDB" id="4V6Y">
    <property type="method" value="EM"/>
    <property type="resolution" value="12.00 A"/>
    <property type="chains" value="AM=1-114"/>
</dbReference>
<dbReference type="PDB" id="4V6Z">
    <property type="method" value="EM"/>
    <property type="resolution" value="12.00 A"/>
    <property type="chains" value="AM=1-114"/>
</dbReference>
<dbReference type="PDB" id="4V70">
    <property type="method" value="EM"/>
    <property type="resolution" value="17.00 A"/>
    <property type="chains" value="AM=1-114"/>
</dbReference>
<dbReference type="PDB" id="4V71">
    <property type="method" value="EM"/>
    <property type="resolution" value="20.00 A"/>
    <property type="chains" value="AM=1-114"/>
</dbReference>
<dbReference type="PDB" id="4V72">
    <property type="method" value="EM"/>
    <property type="resolution" value="13.00 A"/>
    <property type="chains" value="AM=1-114"/>
</dbReference>
<dbReference type="PDB" id="4V73">
    <property type="method" value="EM"/>
    <property type="resolution" value="15.00 A"/>
    <property type="chains" value="AM=1-114"/>
</dbReference>
<dbReference type="PDB" id="4V74">
    <property type="method" value="EM"/>
    <property type="resolution" value="17.00 A"/>
    <property type="chains" value="AM=1-114"/>
</dbReference>
<dbReference type="PDB" id="4V75">
    <property type="method" value="EM"/>
    <property type="resolution" value="12.00 A"/>
    <property type="chains" value="AM=1-114"/>
</dbReference>
<dbReference type="PDB" id="4V76">
    <property type="method" value="EM"/>
    <property type="resolution" value="17.00 A"/>
    <property type="chains" value="AM=1-114"/>
</dbReference>
<dbReference type="PDB" id="4V77">
    <property type="method" value="EM"/>
    <property type="resolution" value="17.00 A"/>
    <property type="chains" value="AM=1-114"/>
</dbReference>
<dbReference type="PDB" id="4V78">
    <property type="method" value="EM"/>
    <property type="resolution" value="20.00 A"/>
    <property type="chains" value="AM=1-114"/>
</dbReference>
<dbReference type="PDB" id="4V79">
    <property type="method" value="EM"/>
    <property type="resolution" value="15.00 A"/>
    <property type="chains" value="AM=1-114"/>
</dbReference>
<dbReference type="PDB" id="4V7A">
    <property type="method" value="EM"/>
    <property type="resolution" value="9.00 A"/>
    <property type="chains" value="AM=1-114"/>
</dbReference>
<dbReference type="PDB" id="4V7B">
    <property type="method" value="EM"/>
    <property type="resolution" value="6.80 A"/>
    <property type="chains" value="AM=1-118"/>
</dbReference>
<dbReference type="PDB" id="4V7C">
    <property type="method" value="EM"/>
    <property type="resolution" value="7.60 A"/>
    <property type="chains" value="AM=2-118"/>
</dbReference>
<dbReference type="PDB" id="4V7D">
    <property type="method" value="EM"/>
    <property type="resolution" value="7.60 A"/>
    <property type="chains" value="BM=2-118"/>
</dbReference>
<dbReference type="PDB" id="4V7I">
    <property type="method" value="EM"/>
    <property type="resolution" value="9.60 A"/>
    <property type="chains" value="BM=1-118"/>
</dbReference>
<dbReference type="PDB" id="4V7S">
    <property type="method" value="X-ray"/>
    <property type="resolution" value="3.25 A"/>
    <property type="chains" value="AM=2-115, CM=2-114"/>
</dbReference>
<dbReference type="PDB" id="4V7T">
    <property type="method" value="X-ray"/>
    <property type="resolution" value="3.19 A"/>
    <property type="chains" value="AM=2-115, CM=2-114"/>
</dbReference>
<dbReference type="PDB" id="4V7U">
    <property type="method" value="X-ray"/>
    <property type="resolution" value="3.10 A"/>
    <property type="chains" value="AM/CM=2-115"/>
</dbReference>
<dbReference type="PDB" id="4V7V">
    <property type="method" value="X-ray"/>
    <property type="resolution" value="3.29 A"/>
    <property type="chains" value="AM=2-115, CM=2-114"/>
</dbReference>
<dbReference type="PDB" id="4V85">
    <property type="method" value="X-ray"/>
    <property type="resolution" value="3.20 A"/>
    <property type="chains" value="AM=1-118"/>
</dbReference>
<dbReference type="PDB" id="4V89">
    <property type="method" value="X-ray"/>
    <property type="resolution" value="3.70 A"/>
    <property type="chains" value="AM=1-118"/>
</dbReference>
<dbReference type="PDB" id="4V9C">
    <property type="method" value="X-ray"/>
    <property type="resolution" value="3.30 A"/>
    <property type="chains" value="AM/CM=1-118"/>
</dbReference>
<dbReference type="PDB" id="4V9D">
    <property type="method" value="X-ray"/>
    <property type="resolution" value="3.00 A"/>
    <property type="chains" value="AM/BM=2-115"/>
</dbReference>
<dbReference type="PDB" id="4V9O">
    <property type="method" value="X-ray"/>
    <property type="resolution" value="2.90 A"/>
    <property type="chains" value="BM/DM/FM/HM=1-118"/>
</dbReference>
<dbReference type="PDB" id="4V9P">
    <property type="method" value="X-ray"/>
    <property type="resolution" value="2.90 A"/>
    <property type="chains" value="BM/DM/FM/HM=1-118"/>
</dbReference>
<dbReference type="PDB" id="4WF1">
    <property type="method" value="X-ray"/>
    <property type="resolution" value="3.09 A"/>
    <property type="chains" value="AM/CM=2-115"/>
</dbReference>
<dbReference type="PDB" id="4WOI">
    <property type="method" value="X-ray"/>
    <property type="resolution" value="3.00 A"/>
    <property type="chains" value="AM/DM=1-118"/>
</dbReference>
<dbReference type="PDB" id="4WWW">
    <property type="method" value="X-ray"/>
    <property type="resolution" value="3.10 A"/>
    <property type="chains" value="QM/XM=2-115"/>
</dbReference>
<dbReference type="PDB" id="4YBB">
    <property type="method" value="X-ray"/>
    <property type="resolution" value="2.10 A"/>
    <property type="chains" value="AM/BM=2-115"/>
</dbReference>
<dbReference type="PDB" id="5AFI">
    <property type="method" value="EM"/>
    <property type="resolution" value="2.90 A"/>
    <property type="chains" value="m=1-118"/>
</dbReference>
<dbReference type="PDB" id="5H5U">
    <property type="method" value="EM"/>
    <property type="resolution" value="3.00 A"/>
    <property type="chains" value="t=2-118"/>
</dbReference>
<dbReference type="PDB" id="5IQR">
    <property type="method" value="EM"/>
    <property type="resolution" value="3.00 A"/>
    <property type="chains" value="r=1-118"/>
</dbReference>
<dbReference type="PDB" id="5IT8">
    <property type="method" value="X-ray"/>
    <property type="resolution" value="3.12 A"/>
    <property type="chains" value="AM/BM=2-115"/>
</dbReference>
<dbReference type="PDB" id="5J5B">
    <property type="method" value="X-ray"/>
    <property type="resolution" value="2.80 A"/>
    <property type="chains" value="AM/BM=2-115"/>
</dbReference>
<dbReference type="PDB" id="5J7L">
    <property type="method" value="X-ray"/>
    <property type="resolution" value="3.00 A"/>
    <property type="chains" value="AM/BM=2-115"/>
</dbReference>
<dbReference type="PDB" id="5J88">
    <property type="method" value="X-ray"/>
    <property type="resolution" value="3.32 A"/>
    <property type="chains" value="AM/BM=2-115"/>
</dbReference>
<dbReference type="PDB" id="5J8A">
    <property type="method" value="X-ray"/>
    <property type="resolution" value="3.10 A"/>
    <property type="chains" value="AM/BM=2-115"/>
</dbReference>
<dbReference type="PDB" id="5J91">
    <property type="method" value="X-ray"/>
    <property type="resolution" value="2.96 A"/>
    <property type="chains" value="AM/BM=2-115"/>
</dbReference>
<dbReference type="PDB" id="5JC9">
    <property type="method" value="X-ray"/>
    <property type="resolution" value="3.03 A"/>
    <property type="chains" value="AM/BM=2-115"/>
</dbReference>
<dbReference type="PDB" id="5JTE">
    <property type="method" value="EM"/>
    <property type="resolution" value="3.60 A"/>
    <property type="chains" value="AM=1-118"/>
</dbReference>
<dbReference type="PDB" id="5JU8">
    <property type="method" value="EM"/>
    <property type="resolution" value="3.60 A"/>
    <property type="chains" value="AM=1-118"/>
</dbReference>
<dbReference type="PDB" id="5KCR">
    <property type="method" value="EM"/>
    <property type="resolution" value="3.60 A"/>
    <property type="chains" value="1m=1-118"/>
</dbReference>
<dbReference type="PDB" id="5KCS">
    <property type="method" value="EM"/>
    <property type="resolution" value="3.90 A"/>
    <property type="chains" value="1m=1-118"/>
</dbReference>
<dbReference type="PDB" id="5KPS">
    <property type="method" value="EM"/>
    <property type="resolution" value="3.90 A"/>
    <property type="chains" value="18=1-118"/>
</dbReference>
<dbReference type="PDB" id="5KPV">
    <property type="method" value="EM"/>
    <property type="resolution" value="4.10 A"/>
    <property type="chains" value="17=1-118"/>
</dbReference>
<dbReference type="PDB" id="5KPW">
    <property type="method" value="EM"/>
    <property type="resolution" value="3.90 A"/>
    <property type="chains" value="17=1-118"/>
</dbReference>
<dbReference type="PDB" id="5KPX">
    <property type="method" value="EM"/>
    <property type="resolution" value="3.90 A"/>
    <property type="chains" value="17=1-118"/>
</dbReference>
<dbReference type="PDB" id="5L3P">
    <property type="method" value="EM"/>
    <property type="resolution" value="3.70 A"/>
    <property type="chains" value="m=1-118"/>
</dbReference>
<dbReference type="PDB" id="5LZA">
    <property type="method" value="EM"/>
    <property type="resolution" value="3.60 A"/>
    <property type="chains" value="m=2-115"/>
</dbReference>
<dbReference type="PDB" id="5LZB">
    <property type="method" value="EM"/>
    <property type="resolution" value="5.30 A"/>
    <property type="chains" value="m=2-115"/>
</dbReference>
<dbReference type="PDB" id="5LZC">
    <property type="method" value="EM"/>
    <property type="resolution" value="4.80 A"/>
    <property type="chains" value="m=2-115"/>
</dbReference>
<dbReference type="PDB" id="5LZD">
    <property type="method" value="EM"/>
    <property type="resolution" value="3.40 A"/>
    <property type="chains" value="m=2-115"/>
</dbReference>
<dbReference type="PDB" id="5LZE">
    <property type="method" value="EM"/>
    <property type="resolution" value="3.50 A"/>
    <property type="chains" value="m=2-115"/>
</dbReference>
<dbReference type="PDB" id="5LZF">
    <property type="method" value="EM"/>
    <property type="resolution" value="4.60 A"/>
    <property type="chains" value="m=2-115"/>
</dbReference>
<dbReference type="PDB" id="5MDV">
    <property type="method" value="EM"/>
    <property type="resolution" value="2.97 A"/>
    <property type="chains" value="r=1-118"/>
</dbReference>
<dbReference type="PDB" id="5MDW">
    <property type="method" value="EM"/>
    <property type="resolution" value="3.06 A"/>
    <property type="chains" value="r=1-118"/>
</dbReference>
<dbReference type="PDB" id="5MDY">
    <property type="method" value="EM"/>
    <property type="resolution" value="3.35 A"/>
    <property type="chains" value="r=1-118"/>
</dbReference>
<dbReference type="PDB" id="5MDZ">
    <property type="method" value="EM"/>
    <property type="resolution" value="3.10 A"/>
    <property type="chains" value="r=1-118"/>
</dbReference>
<dbReference type="PDB" id="5ME0">
    <property type="method" value="EM"/>
    <property type="resolution" value="13.50 A"/>
    <property type="chains" value="M=1-118"/>
</dbReference>
<dbReference type="PDB" id="5ME1">
    <property type="method" value="EM"/>
    <property type="resolution" value="13.50 A"/>
    <property type="chains" value="M=1-118"/>
</dbReference>
<dbReference type="PDB" id="5MGP">
    <property type="method" value="EM"/>
    <property type="resolution" value="3.10 A"/>
    <property type="chains" value="m=2-115"/>
</dbReference>
<dbReference type="PDB" id="5MY1">
    <property type="method" value="EM"/>
    <property type="resolution" value="7.60 A"/>
    <property type="chains" value="M=2-118"/>
</dbReference>
<dbReference type="PDB" id="5NO2">
    <property type="method" value="EM"/>
    <property type="resolution" value="5.16 A"/>
    <property type="chains" value="M=2-115"/>
</dbReference>
<dbReference type="PDB" id="5NO3">
    <property type="method" value="EM"/>
    <property type="resolution" value="5.16 A"/>
    <property type="chains" value="M=2-115"/>
</dbReference>
<dbReference type="PDB" id="5NO4">
    <property type="method" value="EM"/>
    <property type="resolution" value="5.16 A"/>
    <property type="chains" value="M=2-115"/>
</dbReference>
<dbReference type="PDB" id="5NP6">
    <property type="method" value="EM"/>
    <property type="resolution" value="3.60 A"/>
    <property type="chains" value="P=2-115"/>
</dbReference>
<dbReference type="PDB" id="5NWY">
    <property type="method" value="EM"/>
    <property type="resolution" value="2.93 A"/>
    <property type="chains" value="C=1-118"/>
</dbReference>
<dbReference type="PDB" id="5O2R">
    <property type="method" value="EM"/>
    <property type="resolution" value="3.40 A"/>
    <property type="chains" value="m=2-115"/>
</dbReference>
<dbReference type="PDB" id="5U4I">
    <property type="method" value="EM"/>
    <property type="resolution" value="3.50 A"/>
    <property type="chains" value="m=1-118"/>
</dbReference>
<dbReference type="PDB" id="5U9F">
    <property type="method" value="EM"/>
    <property type="resolution" value="3.20 A"/>
    <property type="chains" value="M=1-118"/>
</dbReference>
<dbReference type="PDB" id="5U9G">
    <property type="method" value="EM"/>
    <property type="resolution" value="3.20 A"/>
    <property type="chains" value="M=1-118"/>
</dbReference>
<dbReference type="PDB" id="5UYK">
    <property type="method" value="EM"/>
    <property type="resolution" value="3.90 A"/>
    <property type="chains" value="M=2-115"/>
</dbReference>
<dbReference type="PDB" id="5UYL">
    <property type="method" value="EM"/>
    <property type="resolution" value="3.60 A"/>
    <property type="chains" value="M=2-115"/>
</dbReference>
<dbReference type="PDB" id="5UYM">
    <property type="method" value="EM"/>
    <property type="resolution" value="3.20 A"/>
    <property type="chains" value="M=2-115"/>
</dbReference>
<dbReference type="PDB" id="5UYN">
    <property type="method" value="EM"/>
    <property type="resolution" value="4.00 A"/>
    <property type="chains" value="M=2-115"/>
</dbReference>
<dbReference type="PDB" id="5UYP">
    <property type="method" value="EM"/>
    <property type="resolution" value="3.90 A"/>
    <property type="chains" value="M=2-115"/>
</dbReference>
<dbReference type="PDB" id="5UYQ">
    <property type="method" value="EM"/>
    <property type="resolution" value="3.80 A"/>
    <property type="chains" value="M=2-115"/>
</dbReference>
<dbReference type="PDB" id="5UZ4">
    <property type="method" value="EM"/>
    <property type="resolution" value="5.80 A"/>
    <property type="chains" value="M=1-118"/>
</dbReference>
<dbReference type="PDB" id="5WDT">
    <property type="method" value="EM"/>
    <property type="resolution" value="3.00 A"/>
    <property type="chains" value="m=2-116"/>
</dbReference>
<dbReference type="PDB" id="5WE4">
    <property type="method" value="EM"/>
    <property type="resolution" value="3.10 A"/>
    <property type="chains" value="m=2-116"/>
</dbReference>
<dbReference type="PDB" id="5WE6">
    <property type="method" value="EM"/>
    <property type="resolution" value="3.40 A"/>
    <property type="chains" value="m=2-115"/>
</dbReference>
<dbReference type="PDB" id="5WF0">
    <property type="method" value="EM"/>
    <property type="resolution" value="3.60 A"/>
    <property type="chains" value="m=2-116"/>
</dbReference>
<dbReference type="PDB" id="5WFK">
    <property type="method" value="EM"/>
    <property type="resolution" value="3.40 A"/>
    <property type="chains" value="m=2-116"/>
</dbReference>
<dbReference type="PDB" id="5WFS">
    <property type="method" value="EM"/>
    <property type="resolution" value="3.00 A"/>
    <property type="chains" value="m=2-116"/>
</dbReference>
<dbReference type="PDB" id="6AWB">
    <property type="method" value="EM"/>
    <property type="resolution" value="6.70 A"/>
    <property type="chains" value="P=2-115"/>
</dbReference>
<dbReference type="PDB" id="6AWC">
    <property type="method" value="EM"/>
    <property type="resolution" value="7.90 A"/>
    <property type="chains" value="P=2-115"/>
</dbReference>
<dbReference type="PDB" id="6AWD">
    <property type="method" value="EM"/>
    <property type="resolution" value="8.10 A"/>
    <property type="chains" value="P=2-115"/>
</dbReference>
<dbReference type="PDB" id="6BU8">
    <property type="method" value="EM"/>
    <property type="resolution" value="3.50 A"/>
    <property type="chains" value="M=2-115"/>
</dbReference>
<dbReference type="PDB" id="6BY1">
    <property type="method" value="X-ray"/>
    <property type="resolution" value="3.94 A"/>
    <property type="chains" value="AM/BM=2-115"/>
</dbReference>
<dbReference type="PDB" id="6C4I">
    <property type="method" value="EM"/>
    <property type="resolution" value="3.24 A"/>
    <property type="chains" value="m=1-118"/>
</dbReference>
<dbReference type="PDB" id="6DNC">
    <property type="method" value="EM"/>
    <property type="resolution" value="3.70 A"/>
    <property type="chains" value="ZA=1-118"/>
</dbReference>
<dbReference type="PDB" id="6ENF">
    <property type="method" value="EM"/>
    <property type="resolution" value="3.20 A"/>
    <property type="chains" value="m=2-115"/>
</dbReference>
<dbReference type="PDB" id="6ENJ">
    <property type="method" value="EM"/>
    <property type="resolution" value="3.70 A"/>
    <property type="chains" value="m=2-115"/>
</dbReference>
<dbReference type="PDB" id="6ENU">
    <property type="method" value="EM"/>
    <property type="resolution" value="3.10 A"/>
    <property type="chains" value="m=2-115"/>
</dbReference>
<dbReference type="PDB" id="6GWT">
    <property type="method" value="EM"/>
    <property type="resolution" value="3.80 A"/>
    <property type="chains" value="m=2-115"/>
</dbReference>
<dbReference type="PDB" id="6GXM">
    <property type="method" value="EM"/>
    <property type="resolution" value="3.80 A"/>
    <property type="chains" value="m=2-115"/>
</dbReference>
<dbReference type="PDB" id="6GXN">
    <property type="method" value="EM"/>
    <property type="resolution" value="3.90 A"/>
    <property type="chains" value="m=2-115"/>
</dbReference>
<dbReference type="PDB" id="6GXO">
    <property type="method" value="EM"/>
    <property type="resolution" value="3.90 A"/>
    <property type="chains" value="m=2-115"/>
</dbReference>
<dbReference type="PDB" id="6GXP">
    <property type="method" value="EM"/>
    <property type="resolution" value="4.40 A"/>
    <property type="chains" value="m=2-115"/>
</dbReference>
<dbReference type="PDB" id="6H4N">
    <property type="method" value="EM"/>
    <property type="resolution" value="3.00 A"/>
    <property type="chains" value="m=2-115"/>
</dbReference>
<dbReference type="PDB" id="6H58">
    <property type="method" value="EM"/>
    <property type="resolution" value="7.90 A"/>
    <property type="chains" value="m/mm=2-115"/>
</dbReference>
<dbReference type="PDB" id="6HRM">
    <property type="method" value="EM"/>
    <property type="resolution" value="2.96 A"/>
    <property type="chains" value="r=2-117"/>
</dbReference>
<dbReference type="PDB" id="6I7V">
    <property type="method" value="X-ray"/>
    <property type="resolution" value="2.90 A"/>
    <property type="chains" value="AM/BM=2-115"/>
</dbReference>
<dbReference type="PDB" id="6O7K">
    <property type="method" value="EM"/>
    <property type="resolution" value="4.20 A"/>
    <property type="chains" value="s=2-115"/>
</dbReference>
<dbReference type="PDB" id="6O9J">
    <property type="method" value="EM"/>
    <property type="resolution" value="3.90 A"/>
    <property type="chains" value="m=2-115"/>
</dbReference>
<dbReference type="PDB" id="6O9K">
    <property type="method" value="EM"/>
    <property type="resolution" value="4.00 A"/>
    <property type="chains" value="m=2-115"/>
</dbReference>
<dbReference type="PDB" id="6OFX">
    <property type="method" value="EM"/>
    <property type="resolution" value="3.30 A"/>
    <property type="chains" value="R=2-115"/>
</dbReference>
<dbReference type="PDB" id="6OG7">
    <property type="method" value="EM"/>
    <property type="resolution" value="3.30 A"/>
    <property type="chains" value="R=2-115"/>
</dbReference>
<dbReference type="PDB" id="6OGF">
    <property type="method" value="EM"/>
    <property type="resolution" value="3.90 A"/>
    <property type="chains" value="R=1-118"/>
</dbReference>
<dbReference type="PDB" id="6OGG">
    <property type="method" value="EM"/>
    <property type="resolution" value="4.20 A"/>
    <property type="chains" value="R=1-118"/>
</dbReference>
<dbReference type="PDB" id="6OGI">
    <property type="method" value="EM"/>
    <property type="resolution" value="3.40 A"/>
    <property type="chains" value="R=1-118"/>
</dbReference>
<dbReference type="PDB" id="6OM6">
    <property type="method" value="EM"/>
    <property type="resolution" value="3.10 A"/>
    <property type="chains" value="r=1-118"/>
</dbReference>
<dbReference type="PDB" id="6ORE">
    <property type="method" value="EM"/>
    <property type="resolution" value="2.90 A"/>
    <property type="chains" value="r=2-117"/>
</dbReference>
<dbReference type="PDB" id="6ORL">
    <property type="method" value="EM"/>
    <property type="resolution" value="3.50 A"/>
    <property type="chains" value="r=2-117"/>
</dbReference>
<dbReference type="PDB" id="6OSK">
    <property type="method" value="EM"/>
    <property type="resolution" value="3.60 A"/>
    <property type="chains" value="r=2-117"/>
</dbReference>
<dbReference type="PDB" id="6OSQ">
    <property type="method" value="EM"/>
    <property type="resolution" value="3.50 A"/>
    <property type="chains" value="r=2-117"/>
</dbReference>
<dbReference type="PDB" id="6OST">
    <property type="method" value="EM"/>
    <property type="resolution" value="4.20 A"/>
    <property type="chains" value="r=2-117"/>
</dbReference>
<dbReference type="PDB" id="6OT3">
    <property type="method" value="EM"/>
    <property type="resolution" value="3.90 A"/>
    <property type="chains" value="r=2-117"/>
</dbReference>
<dbReference type="PDB" id="6OUO">
    <property type="method" value="EM"/>
    <property type="resolution" value="3.70 A"/>
    <property type="chains" value="r=2-117"/>
</dbReference>
<dbReference type="PDB" id="6Q98">
    <property type="method" value="EM"/>
    <property type="resolution" value="4.30 A"/>
    <property type="chains" value="r=1-118"/>
</dbReference>
<dbReference type="PDB" id="6Q9A">
    <property type="method" value="EM"/>
    <property type="resolution" value="3.70 A"/>
    <property type="chains" value="r=2-117"/>
</dbReference>
<dbReference type="PDB" id="6SZS">
    <property type="method" value="EM"/>
    <property type="resolution" value="3.06 A"/>
    <property type="chains" value="m=1-118"/>
</dbReference>
<dbReference type="PDB" id="6TBV">
    <property type="method" value="EM"/>
    <property type="resolution" value="2.70 A"/>
    <property type="chains" value="S131=1-118"/>
</dbReference>
<dbReference type="PDB" id="6TC3">
    <property type="method" value="EM"/>
    <property type="resolution" value="2.70 A"/>
    <property type="chains" value="S131=1-118"/>
</dbReference>
<dbReference type="PDB" id="6VU3">
    <property type="method" value="EM"/>
    <property type="resolution" value="3.70 A"/>
    <property type="chains" value="X=2-117"/>
</dbReference>
<dbReference type="PDB" id="6VWL">
    <property type="method" value="EM"/>
    <property type="resolution" value="3.10 A"/>
    <property type="chains" value="l=1-118"/>
</dbReference>
<dbReference type="PDB" id="6VWM">
    <property type="method" value="EM"/>
    <property type="resolution" value="3.40 A"/>
    <property type="chains" value="l=1-118"/>
</dbReference>
<dbReference type="PDB" id="6VWN">
    <property type="method" value="EM"/>
    <property type="resolution" value="3.40 A"/>
    <property type="chains" value="l=1-118"/>
</dbReference>
<dbReference type="PDB" id="6VYQ">
    <property type="method" value="EM"/>
    <property type="resolution" value="3.70 A"/>
    <property type="chains" value="X=1-118"/>
</dbReference>
<dbReference type="PDB" id="6VYR">
    <property type="method" value="EM"/>
    <property type="resolution" value="3.80 A"/>
    <property type="chains" value="X=1-118"/>
</dbReference>
<dbReference type="PDB" id="6VYS">
    <property type="method" value="EM"/>
    <property type="resolution" value="3.70 A"/>
    <property type="chains" value="X=1-118"/>
</dbReference>
<dbReference type="PDB" id="6VYT">
    <property type="method" value="EM"/>
    <property type="resolution" value="14.00 A"/>
    <property type="chains" value="X=1-118"/>
</dbReference>
<dbReference type="PDB" id="6VYU">
    <property type="method" value="EM"/>
    <property type="resolution" value="7.00 A"/>
    <property type="chains" value="X=1-118"/>
</dbReference>
<dbReference type="PDB" id="6VYW">
    <property type="method" value="EM"/>
    <property type="resolution" value="7.00 A"/>
    <property type="chains" value="X=1-118"/>
</dbReference>
<dbReference type="PDB" id="6VYX">
    <property type="method" value="EM"/>
    <property type="resolution" value="9.90 A"/>
    <property type="chains" value="X=1-118"/>
</dbReference>
<dbReference type="PDB" id="6VYY">
    <property type="method" value="EM"/>
    <property type="resolution" value="9.90 A"/>
    <property type="chains" value="X=1-118"/>
</dbReference>
<dbReference type="PDB" id="6VYZ">
    <property type="method" value="EM"/>
    <property type="resolution" value="9.90 A"/>
    <property type="chains" value="X=1-118"/>
</dbReference>
<dbReference type="PDB" id="6VZ2">
    <property type="method" value="EM"/>
    <property type="resolution" value="10.00 A"/>
    <property type="chains" value="X=1-118"/>
</dbReference>
<dbReference type="PDB" id="6VZ3">
    <property type="method" value="EM"/>
    <property type="resolution" value="8.90 A"/>
    <property type="chains" value="X=2-117"/>
</dbReference>
<dbReference type="PDB" id="6VZ5">
    <property type="method" value="EM"/>
    <property type="resolution" value="8.90 A"/>
    <property type="chains" value="X=1-118"/>
</dbReference>
<dbReference type="PDB" id="6VZ7">
    <property type="method" value="EM"/>
    <property type="resolution" value="7.00 A"/>
    <property type="chains" value="X=2-117"/>
</dbReference>
<dbReference type="PDB" id="6VZJ">
    <property type="method" value="EM"/>
    <property type="resolution" value="4.10 A"/>
    <property type="chains" value="X=2-117"/>
</dbReference>
<dbReference type="PDB" id="6W6K">
    <property type="method" value="EM"/>
    <property type="resolution" value="3.60 A"/>
    <property type="chains" value="M=1-118"/>
</dbReference>
<dbReference type="PDB" id="6W77">
    <property type="method" value="EM"/>
    <property type="resolution" value="3.60 A"/>
    <property type="chains" value="M=1-118"/>
</dbReference>
<dbReference type="PDB" id="6W7M">
    <property type="method" value="EM"/>
    <property type="resolution" value="3.80 A"/>
    <property type="chains" value="M=1-118"/>
</dbReference>
<dbReference type="PDB" id="6W7N">
    <property type="method" value="EM"/>
    <property type="resolution" value="3.40 A"/>
    <property type="chains" value="M=1-118"/>
</dbReference>
<dbReference type="PDB" id="6WD0">
    <property type="method" value="EM"/>
    <property type="resolution" value="3.00 A"/>
    <property type="chains" value="R=2-115"/>
</dbReference>
<dbReference type="PDB" id="6WD1">
    <property type="method" value="EM"/>
    <property type="resolution" value="3.30 A"/>
    <property type="chains" value="R=2-115"/>
</dbReference>
<dbReference type="PDB" id="6WD2">
    <property type="method" value="EM"/>
    <property type="resolution" value="3.60 A"/>
    <property type="chains" value="R=2-115"/>
</dbReference>
<dbReference type="PDB" id="6WD3">
    <property type="method" value="EM"/>
    <property type="resolution" value="3.60 A"/>
    <property type="chains" value="R=2-115"/>
</dbReference>
<dbReference type="PDB" id="6WD4">
    <property type="method" value="EM"/>
    <property type="resolution" value="3.70 A"/>
    <property type="chains" value="R=2-115"/>
</dbReference>
<dbReference type="PDB" id="6WD5">
    <property type="method" value="EM"/>
    <property type="resolution" value="3.60 A"/>
    <property type="chains" value="R=2-115"/>
</dbReference>
<dbReference type="PDB" id="6WD6">
    <property type="method" value="EM"/>
    <property type="resolution" value="3.70 A"/>
    <property type="chains" value="R=2-115"/>
</dbReference>
<dbReference type="PDB" id="6WD7">
    <property type="method" value="EM"/>
    <property type="resolution" value="3.90 A"/>
    <property type="chains" value="R=2-115"/>
</dbReference>
<dbReference type="PDB" id="6WD8">
    <property type="method" value="EM"/>
    <property type="resolution" value="3.70 A"/>
    <property type="chains" value="R=2-115"/>
</dbReference>
<dbReference type="PDB" id="6WD9">
    <property type="method" value="EM"/>
    <property type="resolution" value="3.70 A"/>
    <property type="chains" value="R=2-115"/>
</dbReference>
<dbReference type="PDB" id="6WDA">
    <property type="method" value="EM"/>
    <property type="resolution" value="3.80 A"/>
    <property type="chains" value="R=2-115"/>
</dbReference>
<dbReference type="PDB" id="6WDB">
    <property type="method" value="EM"/>
    <property type="resolution" value="4.00 A"/>
    <property type="chains" value="R=2-115"/>
</dbReference>
<dbReference type="PDB" id="6WDC">
    <property type="method" value="EM"/>
    <property type="resolution" value="4.20 A"/>
    <property type="chains" value="R=2-115"/>
</dbReference>
<dbReference type="PDB" id="6WDD">
    <property type="method" value="EM"/>
    <property type="resolution" value="3.20 A"/>
    <property type="chains" value="R=2-115"/>
</dbReference>
<dbReference type="PDB" id="6WDE">
    <property type="method" value="EM"/>
    <property type="resolution" value="3.00 A"/>
    <property type="chains" value="R=2-115"/>
</dbReference>
<dbReference type="PDB" id="6WDF">
    <property type="method" value="EM"/>
    <property type="resolution" value="3.30 A"/>
    <property type="chains" value="R=2-115"/>
</dbReference>
<dbReference type="PDB" id="6WDG">
    <property type="method" value="EM"/>
    <property type="resolution" value="3.30 A"/>
    <property type="chains" value="R=2-115"/>
</dbReference>
<dbReference type="PDB" id="6WDH">
    <property type="method" value="EM"/>
    <property type="resolution" value="4.30 A"/>
    <property type="chains" value="R=2-115"/>
</dbReference>
<dbReference type="PDB" id="6WDI">
    <property type="method" value="EM"/>
    <property type="resolution" value="4.00 A"/>
    <property type="chains" value="R=2-115"/>
</dbReference>
<dbReference type="PDB" id="6WDJ">
    <property type="method" value="EM"/>
    <property type="resolution" value="3.70 A"/>
    <property type="chains" value="R=2-115"/>
</dbReference>
<dbReference type="PDB" id="6WDK">
    <property type="method" value="EM"/>
    <property type="resolution" value="3.60 A"/>
    <property type="chains" value="R=2-115"/>
</dbReference>
<dbReference type="PDB" id="6WDL">
    <property type="method" value="EM"/>
    <property type="resolution" value="3.70 A"/>
    <property type="chains" value="R=2-115"/>
</dbReference>
<dbReference type="PDB" id="6WDM">
    <property type="method" value="EM"/>
    <property type="resolution" value="3.60 A"/>
    <property type="chains" value="R=2-115"/>
</dbReference>
<dbReference type="PDB" id="6WNV">
    <property type="method" value="EM"/>
    <property type="resolution" value="3.50 A"/>
    <property type="chains" value="R=2-115"/>
</dbReference>
<dbReference type="PDB" id="6WNW">
    <property type="method" value="EM"/>
    <property type="resolution" value="3.20 A"/>
    <property type="chains" value="R=2-115"/>
</dbReference>
<dbReference type="PDB" id="6X6T">
    <property type="method" value="EM"/>
    <property type="resolution" value="3.20 A"/>
    <property type="chains" value="X=1-118"/>
</dbReference>
<dbReference type="PDB" id="6X7F">
    <property type="method" value="EM"/>
    <property type="resolution" value="3.50 A"/>
    <property type="chains" value="X=1-118"/>
</dbReference>
<dbReference type="PDB" id="6X7K">
    <property type="method" value="EM"/>
    <property type="resolution" value="3.10 A"/>
    <property type="chains" value="X=1-118"/>
</dbReference>
<dbReference type="PDB" id="6X9Q">
    <property type="method" value="EM"/>
    <property type="resolution" value="4.80 A"/>
    <property type="chains" value="X=1-118"/>
</dbReference>
<dbReference type="PDB" id="6XDQ">
    <property type="method" value="EM"/>
    <property type="resolution" value="3.70 A"/>
    <property type="chains" value="X=1-118"/>
</dbReference>
<dbReference type="PDB" id="6XDR">
    <property type="method" value="EM"/>
    <property type="resolution" value="4.70 A"/>
    <property type="chains" value="X=1-118"/>
</dbReference>
<dbReference type="PDB" id="6XE0">
    <property type="method" value="EM"/>
    <property type="resolution" value="6.80 A"/>
    <property type="chains" value="L=2-115"/>
</dbReference>
<dbReference type="PDB" id="6XGF">
    <property type="method" value="EM"/>
    <property type="resolution" value="5.00 A"/>
    <property type="chains" value="X=1-118"/>
</dbReference>
<dbReference type="PDB" id="6XII">
    <property type="method" value="EM"/>
    <property type="resolution" value="7.00 A"/>
    <property type="chains" value="X=1-118"/>
</dbReference>
<dbReference type="PDB" id="6XIJ">
    <property type="method" value="EM"/>
    <property type="resolution" value="8.00 A"/>
    <property type="chains" value="X=1-118"/>
</dbReference>
<dbReference type="PDB" id="6XZA">
    <property type="method" value="EM"/>
    <property type="resolution" value="2.66 A"/>
    <property type="chains" value="M1=2-115"/>
</dbReference>
<dbReference type="PDB" id="6XZB">
    <property type="method" value="EM"/>
    <property type="resolution" value="2.54 A"/>
    <property type="chains" value="M1=2-115"/>
</dbReference>
<dbReference type="PDB" id="6Y69">
    <property type="method" value="EM"/>
    <property type="resolution" value="2.86 A"/>
    <property type="chains" value="m=2-115"/>
</dbReference>
<dbReference type="PDB" id="6ZTJ">
    <property type="method" value="EM"/>
    <property type="resolution" value="3.40 A"/>
    <property type="chains" value="AM=1-118"/>
</dbReference>
<dbReference type="PDB" id="6ZTL">
    <property type="method" value="EM"/>
    <property type="resolution" value="3.50 A"/>
    <property type="chains" value="AM=1-118"/>
</dbReference>
<dbReference type="PDB" id="6ZTM">
    <property type="method" value="EM"/>
    <property type="resolution" value="3.30 A"/>
    <property type="chains" value="AM=1-118"/>
</dbReference>
<dbReference type="PDB" id="6ZTN">
    <property type="method" value="EM"/>
    <property type="resolution" value="3.90 A"/>
    <property type="chains" value="AM=1-118"/>
</dbReference>
<dbReference type="PDB" id="6ZTO">
    <property type="method" value="EM"/>
    <property type="resolution" value="3.00 A"/>
    <property type="chains" value="AM=1-118"/>
</dbReference>
<dbReference type="PDB" id="6ZTP">
    <property type="method" value="EM"/>
    <property type="resolution" value="3.00 A"/>
    <property type="chains" value="AM=1-118"/>
</dbReference>
<dbReference type="PDB" id="6ZU1">
    <property type="method" value="EM"/>
    <property type="resolution" value="3.00 A"/>
    <property type="chains" value="AM=1-118"/>
</dbReference>
<dbReference type="PDB" id="7ABZ">
    <property type="method" value="EM"/>
    <property type="resolution" value="3.21 A"/>
    <property type="chains" value="r=2-115"/>
</dbReference>
<dbReference type="PDB" id="7AC7">
    <property type="method" value="EM"/>
    <property type="resolution" value="3.08 A"/>
    <property type="chains" value="r=2-116"/>
</dbReference>
<dbReference type="PDB" id="7ACJ">
    <property type="method" value="EM"/>
    <property type="resolution" value="3.20 A"/>
    <property type="chains" value="r=2-113"/>
</dbReference>
<dbReference type="PDB" id="7ACR">
    <property type="method" value="EM"/>
    <property type="resolution" value="3.44 A"/>
    <property type="chains" value="r=2-113"/>
</dbReference>
<dbReference type="PDB" id="7AF3">
    <property type="method" value="EM"/>
    <property type="resolution" value="2.82 A"/>
    <property type="chains" value="M=1-118"/>
</dbReference>
<dbReference type="PDB" id="7AF5">
    <property type="method" value="EM"/>
    <property type="resolution" value="2.96 A"/>
    <property type="chains" value="M=1-118"/>
</dbReference>
<dbReference type="PDB" id="7AF8">
    <property type="method" value="EM"/>
    <property type="resolution" value="2.75 A"/>
    <property type="chains" value="M=1-118"/>
</dbReference>
<dbReference type="PDB" id="7AFA">
    <property type="method" value="EM"/>
    <property type="resolution" value="2.95 A"/>
    <property type="chains" value="M=1-118"/>
</dbReference>
<dbReference type="PDB" id="7AFD">
    <property type="method" value="EM"/>
    <property type="resolution" value="3.44 A"/>
    <property type="chains" value="M=1-118"/>
</dbReference>
<dbReference type="PDB" id="7AFH">
    <property type="method" value="EM"/>
    <property type="resolution" value="3.59 A"/>
    <property type="chains" value="M=1-118"/>
</dbReference>
<dbReference type="PDB" id="7AFK">
    <property type="method" value="EM"/>
    <property type="resolution" value="4.90 A"/>
    <property type="chains" value="M=1-118"/>
</dbReference>
<dbReference type="PDB" id="7AFN">
    <property type="method" value="EM"/>
    <property type="resolution" value="3.86 A"/>
    <property type="chains" value="M=1-118"/>
</dbReference>
<dbReference type="PDB" id="7B5K">
    <property type="method" value="EM"/>
    <property type="resolution" value="2.90 A"/>
    <property type="chains" value="m=2-115"/>
</dbReference>
<dbReference type="PDB" id="7BOE">
    <property type="method" value="EM"/>
    <property type="resolution" value="2.90 A"/>
    <property type="chains" value="M=1-118"/>
</dbReference>
<dbReference type="PDB" id="7BOH">
    <property type="method" value="EM"/>
    <property type="resolution" value="2.82 A"/>
    <property type="chains" value="M=1-118"/>
</dbReference>
<dbReference type="PDB" id="7D6Z">
    <property type="method" value="EM"/>
    <property type="resolution" value="3.40 A"/>
    <property type="chains" value="t=1-118"/>
</dbReference>
<dbReference type="PDB" id="7D80">
    <property type="method" value="EM"/>
    <property type="resolution" value="4.10 A"/>
    <property type="chains" value="N=1-118"/>
</dbReference>
<dbReference type="PDB" id="7JSS">
    <property type="method" value="EM"/>
    <property type="resolution" value="3.70 A"/>
    <property type="chains" value="R=2-115"/>
</dbReference>
<dbReference type="PDB" id="7JSW">
    <property type="method" value="EM"/>
    <property type="resolution" value="3.80 A"/>
    <property type="chains" value="R=2-115"/>
</dbReference>
<dbReference type="PDB" id="7JSZ">
    <property type="method" value="EM"/>
    <property type="resolution" value="3.70 A"/>
    <property type="chains" value="R=2-115"/>
</dbReference>
<dbReference type="PDB" id="7JT1">
    <property type="method" value="EM"/>
    <property type="resolution" value="3.30 A"/>
    <property type="chains" value="R=2-115"/>
</dbReference>
<dbReference type="PDB" id="7JT2">
    <property type="method" value="EM"/>
    <property type="resolution" value="3.50 A"/>
    <property type="chains" value="R=2-115"/>
</dbReference>
<dbReference type="PDB" id="7JT3">
    <property type="method" value="EM"/>
    <property type="resolution" value="3.70 A"/>
    <property type="chains" value="R=2-115"/>
</dbReference>
<dbReference type="PDB" id="7K00">
    <property type="method" value="EM"/>
    <property type="resolution" value="1.98 A"/>
    <property type="chains" value="M=1-118"/>
</dbReference>
<dbReference type="PDB" id="7K50">
    <property type="method" value="EM"/>
    <property type="resolution" value="3.40 A"/>
    <property type="chains" value="R=2-115"/>
</dbReference>
<dbReference type="PDB" id="7K51">
    <property type="method" value="EM"/>
    <property type="resolution" value="3.50 A"/>
    <property type="chains" value="R=2-115"/>
</dbReference>
<dbReference type="PDB" id="7K52">
    <property type="method" value="EM"/>
    <property type="resolution" value="3.40 A"/>
    <property type="chains" value="R=2-115"/>
</dbReference>
<dbReference type="PDB" id="7K53">
    <property type="method" value="EM"/>
    <property type="resolution" value="3.20 A"/>
    <property type="chains" value="R=2-115"/>
</dbReference>
<dbReference type="PDB" id="7K54">
    <property type="method" value="EM"/>
    <property type="resolution" value="3.20 A"/>
    <property type="chains" value="R=2-115"/>
</dbReference>
<dbReference type="PDB" id="7K55">
    <property type="method" value="EM"/>
    <property type="resolution" value="3.30 A"/>
    <property type="chains" value="R=2-115"/>
</dbReference>
<dbReference type="PDB" id="7LV0">
    <property type="method" value="EM"/>
    <property type="resolution" value="3.20 A"/>
    <property type="chains" value="R=2-115"/>
</dbReference>
<dbReference type="PDB" id="7M5D">
    <property type="method" value="EM"/>
    <property type="resolution" value="2.80 A"/>
    <property type="chains" value="r=2-117"/>
</dbReference>
<dbReference type="PDB" id="7N1P">
    <property type="method" value="EM"/>
    <property type="resolution" value="2.33 A"/>
    <property type="chains" value="SM=1-118"/>
</dbReference>
<dbReference type="PDB" id="7N2C">
    <property type="method" value="EM"/>
    <property type="resolution" value="2.72 A"/>
    <property type="chains" value="SM=1-118"/>
</dbReference>
<dbReference type="PDB" id="7N2U">
    <property type="method" value="EM"/>
    <property type="resolution" value="2.53 A"/>
    <property type="chains" value="SM=1-118"/>
</dbReference>
<dbReference type="PDB" id="7N2V">
    <property type="method" value="EM"/>
    <property type="resolution" value="2.54 A"/>
    <property type="chains" value="SM=1-118"/>
</dbReference>
<dbReference type="PDB" id="7N30">
    <property type="method" value="EM"/>
    <property type="resolution" value="2.66 A"/>
    <property type="chains" value="SM=1-118"/>
</dbReference>
<dbReference type="PDB" id="7N31">
    <property type="method" value="EM"/>
    <property type="resolution" value="2.69 A"/>
    <property type="chains" value="SM=1-118"/>
</dbReference>
<dbReference type="PDB" id="7NAR">
    <property type="method" value="EM"/>
    <property type="resolution" value="3.00 A"/>
    <property type="chains" value="M=1-118"/>
</dbReference>
<dbReference type="PDB" id="7NAT">
    <property type="method" value="EM"/>
    <property type="resolution" value="3.59 A"/>
    <property type="chains" value="M=1-118"/>
</dbReference>
<dbReference type="PDB" id="7NAU">
    <property type="method" value="EM"/>
    <property type="resolution" value="3.78 A"/>
    <property type="chains" value="M=1-118"/>
</dbReference>
<dbReference type="PDB" id="7NAV">
    <property type="method" value="EM"/>
    <property type="resolution" value="4.80 A"/>
    <property type="chains" value="M=1-118"/>
</dbReference>
<dbReference type="PDB" id="7NAX">
    <property type="method" value="EM"/>
    <property type="resolution" value="2.96 A"/>
    <property type="chains" value="M=1-118"/>
</dbReference>
<dbReference type="PDB" id="7NBU">
    <property type="method" value="EM"/>
    <property type="resolution" value="3.11 A"/>
    <property type="chains" value="M=2-116"/>
</dbReference>
<dbReference type="PDB" id="7O19">
    <property type="method" value="EM"/>
    <property type="resolution" value="2.90 A"/>
    <property type="chains" value="AM=1-118"/>
</dbReference>
<dbReference type="PDB" id="7O1A">
    <property type="method" value="EM"/>
    <property type="resolution" value="2.40 A"/>
    <property type="chains" value="AM=1-118"/>
</dbReference>
<dbReference type="PDB" id="7O1C">
    <property type="method" value="EM"/>
    <property type="resolution" value="2.60 A"/>
    <property type="chains" value="AM=1-118"/>
</dbReference>
<dbReference type="PDB" id="7OE0">
    <property type="method" value="EM"/>
    <property type="resolution" value="2.69 A"/>
    <property type="chains" value="M=2-118"/>
</dbReference>
<dbReference type="PDB" id="7OE1">
    <property type="method" value="EM"/>
    <property type="resolution" value="3.05 A"/>
    <property type="chains" value="M=2-118"/>
</dbReference>
<dbReference type="PDB" id="7OIZ">
    <property type="method" value="EM"/>
    <property type="resolution" value="2.90 A"/>
    <property type="chains" value="M=1-118"/>
</dbReference>
<dbReference type="PDB" id="7OJ0">
    <property type="method" value="EM"/>
    <property type="resolution" value="3.50 A"/>
    <property type="chains" value="M=1-118"/>
</dbReference>
<dbReference type="PDB" id="7P3K">
    <property type="method" value="EM"/>
    <property type="resolution" value="2.90 A"/>
    <property type="chains" value="M=1-118"/>
</dbReference>
<dbReference type="PDB" id="7PJV">
    <property type="method" value="EM"/>
    <property type="resolution" value="3.10 A"/>
    <property type="chains" value="m=1-118"/>
</dbReference>
<dbReference type="PDB" id="7PJY">
    <property type="method" value="EM"/>
    <property type="resolution" value="3.10 A"/>
    <property type="chains" value="m=1-118"/>
</dbReference>
<dbReference type="PDB" id="7QG8">
    <property type="method" value="EM"/>
    <property type="resolution" value="3.97 A"/>
    <property type="chains" value="F=1-118"/>
</dbReference>
<dbReference type="PDB" id="7QGH">
    <property type="method" value="EM"/>
    <property type="resolution" value="4.48 A"/>
    <property type="chains" value="D=1-118"/>
</dbReference>
<dbReference type="PDB" id="7QGN">
    <property type="method" value="EM"/>
    <property type="resolution" value="3.37 A"/>
    <property type="chains" value="F=1-118"/>
</dbReference>
<dbReference type="PDB" id="7QGR">
    <property type="method" value="EM"/>
    <property type="resolution" value="5.70 A"/>
    <property type="chains" value="D=1-118"/>
</dbReference>
<dbReference type="PDB" id="7S1G">
    <property type="method" value="EM"/>
    <property type="resolution" value="2.48 A"/>
    <property type="chains" value="u=1-118"/>
</dbReference>
<dbReference type="PDB" id="7S1H">
    <property type="method" value="EM"/>
    <property type="resolution" value="2.35 A"/>
    <property type="chains" value="u=1-118"/>
</dbReference>
<dbReference type="PDB" id="7S1I">
    <property type="method" value="EM"/>
    <property type="resolution" value="2.48 A"/>
    <property type="chains" value="u=1-118"/>
</dbReference>
<dbReference type="PDB" id="7S1J">
    <property type="method" value="EM"/>
    <property type="resolution" value="2.47 A"/>
    <property type="chains" value="u=1-118"/>
</dbReference>
<dbReference type="PDB" id="7S1K">
    <property type="method" value="EM"/>
    <property type="resolution" value="2.42 A"/>
    <property type="chains" value="u=1-118"/>
</dbReference>
<dbReference type="PDB" id="7SA4">
    <property type="method" value="EM"/>
    <property type="resolution" value="2.55 A"/>
    <property type="chains" value="r=1-118"/>
</dbReference>
<dbReference type="PDB" id="7SS9">
    <property type="method" value="EM"/>
    <property type="resolution" value="3.90 A"/>
    <property type="chains" value="R=2-115"/>
</dbReference>
<dbReference type="PDB" id="7SSD">
    <property type="method" value="EM"/>
    <property type="resolution" value="3.30 A"/>
    <property type="chains" value="R=2-115"/>
</dbReference>
<dbReference type="PDB" id="7SSL">
    <property type="method" value="EM"/>
    <property type="resolution" value="3.80 A"/>
    <property type="chains" value="R=2-115"/>
</dbReference>
<dbReference type="PDB" id="7SSN">
    <property type="method" value="EM"/>
    <property type="resolution" value="3.20 A"/>
    <property type="chains" value="R=2-115"/>
</dbReference>
<dbReference type="PDB" id="7SSO">
    <property type="method" value="EM"/>
    <property type="resolution" value="3.20 A"/>
    <property type="chains" value="R=2-115"/>
</dbReference>
<dbReference type="PDB" id="7SSW">
    <property type="method" value="EM"/>
    <property type="resolution" value="3.80 A"/>
    <property type="chains" value="R=2-115"/>
</dbReference>
<dbReference type="PDB" id="7ST2">
    <property type="method" value="EM"/>
    <property type="resolution" value="2.90 A"/>
    <property type="chains" value="R=2-115"/>
</dbReference>
<dbReference type="PDB" id="7ST6">
    <property type="method" value="EM"/>
    <property type="resolution" value="3.00 A"/>
    <property type="chains" value="R=2-115"/>
</dbReference>
<dbReference type="PDB" id="7ST7">
    <property type="method" value="EM"/>
    <property type="resolution" value="3.20 A"/>
    <property type="chains" value="R=2-115"/>
</dbReference>
<dbReference type="PDB" id="7TOS">
    <property type="method" value="EM"/>
    <property type="resolution" value="2.90 A"/>
    <property type="chains" value="S13=2-115"/>
</dbReference>
<dbReference type="PDB" id="7UG7">
    <property type="method" value="EM"/>
    <property type="resolution" value="2.58 A"/>
    <property type="chains" value="SM=1-118"/>
</dbReference>
<dbReference type="PDB" id="7UPH">
    <property type="method" value="EM"/>
    <property type="resolution" value="4.18 A"/>
    <property type="chains" value="h=2-115"/>
</dbReference>
<dbReference type="PDB" id="7Y7C">
    <property type="method" value="EM"/>
    <property type="resolution" value="2.51 A"/>
    <property type="chains" value="M=1-118"/>
</dbReference>
<dbReference type="PDB" id="7Y7D">
    <property type="method" value="EM"/>
    <property type="resolution" value="2.58 A"/>
    <property type="chains" value="M=1-118"/>
</dbReference>
<dbReference type="PDB" id="7Y7E">
    <property type="method" value="EM"/>
    <property type="resolution" value="2.41 A"/>
    <property type="chains" value="M=1-118"/>
</dbReference>
<dbReference type="PDB" id="7Y7F">
    <property type="method" value="EM"/>
    <property type="resolution" value="2.43 A"/>
    <property type="chains" value="M=1-118"/>
</dbReference>
<dbReference type="PDB" id="7Y7G">
    <property type="method" value="EM"/>
    <property type="resolution" value="2.34 A"/>
    <property type="chains" value="M=1-118"/>
</dbReference>
<dbReference type="PDB" id="7Y7H">
    <property type="method" value="EM"/>
    <property type="resolution" value="2.51 A"/>
    <property type="chains" value="M=1-118"/>
</dbReference>
<dbReference type="PDB" id="7ZTA">
    <property type="method" value="EM"/>
    <property type="resolution" value="2.70 A"/>
    <property type="chains" value="S131=2-115"/>
</dbReference>
<dbReference type="PDB" id="8A3L">
    <property type="method" value="EM"/>
    <property type="resolution" value="3.42 A"/>
    <property type="chains" value="M=1-118"/>
</dbReference>
<dbReference type="PDB" id="8AKN">
    <property type="method" value="EM"/>
    <property type="resolution" value="2.30 A"/>
    <property type="chains" value="N=1-118"/>
</dbReference>
<dbReference type="PDB" id="8AM9">
    <property type="method" value="EM"/>
    <property type="resolution" value="2.80 A"/>
    <property type="chains" value="N=1-118"/>
</dbReference>
<dbReference type="PDB" id="8AYE">
    <property type="method" value="EM"/>
    <property type="resolution" value="1.96 A"/>
    <property type="chains" value="M=1-118"/>
</dbReference>
<dbReference type="PDB" id="8B0X">
    <property type="method" value="EM"/>
    <property type="resolution" value="1.55 A"/>
    <property type="chains" value="M=1-118"/>
</dbReference>
<dbReference type="PDB" id="8B7Y">
    <property type="method" value="EM"/>
    <property type="resolution" value="3.00 A"/>
    <property type="chains" value="r=1-118"/>
</dbReference>
<dbReference type="PDB" id="8BF7">
    <property type="method" value="EM"/>
    <property type="resolution" value="2.33 A"/>
    <property type="chains" value="q=1-118"/>
</dbReference>
<dbReference type="PDB" id="8BGE">
    <property type="method" value="EM"/>
    <property type="resolution" value="2.11 A"/>
    <property type="chains" value="q=1-118"/>
</dbReference>
<dbReference type="PDB" id="8BGH">
    <property type="method" value="EM"/>
    <property type="resolution" value="2.88 A"/>
    <property type="chains" value="q=1-118"/>
</dbReference>
<dbReference type="PDB" id="8BH4">
    <property type="method" value="EM"/>
    <property type="resolution" value="2.62 A"/>
    <property type="chains" value="q=1-118"/>
</dbReference>
<dbReference type="PDB" id="8BHJ">
    <property type="method" value="EM"/>
    <property type="resolution" value="2.81 A"/>
    <property type="chains" value="q=1-118"/>
</dbReference>
<dbReference type="PDB" id="8BHL">
    <property type="method" value="EM"/>
    <property type="resolution" value="2.21 A"/>
    <property type="chains" value="q=1-118"/>
</dbReference>
<dbReference type="PDB" id="8BHN">
    <property type="method" value="EM"/>
    <property type="resolution" value="2.85 A"/>
    <property type="chains" value="q=1-118"/>
</dbReference>
<dbReference type="PDB" id="8BHP">
    <property type="method" value="EM"/>
    <property type="resolution" value="2.37 A"/>
    <property type="chains" value="q=1-118"/>
</dbReference>
<dbReference type="PDB" id="8BIL">
    <property type="method" value="EM"/>
    <property type="resolution" value="2.04 A"/>
    <property type="chains" value="q=1-118"/>
</dbReference>
<dbReference type="PDB" id="8BIM">
    <property type="method" value="EM"/>
    <property type="resolution" value="2.04 A"/>
    <property type="chains" value="q=1-118"/>
</dbReference>
<dbReference type="PDB" id="8CA7">
    <property type="method" value="EM"/>
    <property type="resolution" value="2.06 A"/>
    <property type="chains" value="M=1-118"/>
</dbReference>
<dbReference type="PDB" id="8CAZ">
    <property type="method" value="EM"/>
    <property type="resolution" value="2.11 A"/>
    <property type="chains" value="M=1-118"/>
</dbReference>
<dbReference type="PDB" id="8CF1">
    <property type="method" value="EM"/>
    <property type="resolution" value="1.82 A"/>
    <property type="chains" value="M=1-118"/>
</dbReference>
<dbReference type="PDB" id="8CF8">
    <property type="method" value="EM"/>
    <property type="resolution" value="2.20 A"/>
    <property type="chains" value="M=1-118"/>
</dbReference>
<dbReference type="PDB" id="8CGI">
    <property type="method" value="EM"/>
    <property type="resolution" value="1.89 A"/>
    <property type="chains" value="M=1-118"/>
</dbReference>
<dbReference type="PDB" id="8EIU">
    <property type="method" value="EM"/>
    <property type="resolution" value="2.24 A"/>
    <property type="chains" value="M=1-118"/>
</dbReference>
<dbReference type="PDB" id="8EKC">
    <property type="method" value="EM"/>
    <property type="resolution" value="2.70 A"/>
    <property type="chains" value="m=1-118"/>
</dbReference>
<dbReference type="PDB" id="8EMM">
    <property type="method" value="EM"/>
    <property type="resolution" value="2.10 A"/>
    <property type="chains" value="M=1-118"/>
</dbReference>
<dbReference type="PDB" id="8EYQ">
    <property type="method" value="EM"/>
    <property type="resolution" value="3.30 A"/>
    <property type="chains" value="M=1-118"/>
</dbReference>
<dbReference type="PDB" id="8EYT">
    <property type="method" value="EM"/>
    <property type="resolution" value="2.80 A"/>
    <property type="chains" value="M=1-118"/>
</dbReference>
<dbReference type="PDB" id="8FIZ">
    <property type="method" value="EM"/>
    <property type="resolution" value="3.80 A"/>
    <property type="chains" value="AE=1-118"/>
</dbReference>
<dbReference type="PDB" id="8FTO">
    <property type="method" value="EM"/>
    <property type="resolution" value="1.85 A"/>
    <property type="chains" value="M=1-118"/>
</dbReference>
<dbReference type="PDB" id="8FZD">
    <property type="method" value="EM"/>
    <property type="resolution" value="3.10 A"/>
    <property type="chains" value="m=1-118"/>
</dbReference>
<dbReference type="PDB" id="8FZE">
    <property type="method" value="EM"/>
    <property type="resolution" value="3.00 A"/>
    <property type="chains" value="m=1-118"/>
</dbReference>
<dbReference type="PDB" id="8FZF">
    <property type="method" value="EM"/>
    <property type="resolution" value="3.20 A"/>
    <property type="chains" value="m=1-118"/>
</dbReference>
<dbReference type="PDB" id="8FZG">
    <property type="method" value="EM"/>
    <property type="resolution" value="3.10 A"/>
    <property type="chains" value="m=1-118"/>
</dbReference>
<dbReference type="PDB" id="8FZH">
    <property type="method" value="EM"/>
    <property type="resolution" value="2.90 A"/>
    <property type="chains" value="m=1-118"/>
</dbReference>
<dbReference type="PDB" id="8FZI">
    <property type="method" value="EM"/>
    <property type="resolution" value="3.10 A"/>
    <property type="chains" value="m=1-118"/>
</dbReference>
<dbReference type="PDB" id="8FZJ">
    <property type="method" value="EM"/>
    <property type="resolution" value="3.00 A"/>
    <property type="chains" value="m=1-118"/>
</dbReference>
<dbReference type="PDB" id="8G2U">
    <property type="method" value="EM"/>
    <property type="resolution" value="3.00 A"/>
    <property type="chains" value="l=2-115"/>
</dbReference>
<dbReference type="PDB" id="8G31">
    <property type="method" value="EM"/>
    <property type="resolution" value="3.20 A"/>
    <property type="chains" value="l=2-115"/>
</dbReference>
<dbReference type="PDB" id="8G34">
    <property type="method" value="EM"/>
    <property type="resolution" value="3.20 A"/>
    <property type="chains" value="l=2-115"/>
</dbReference>
<dbReference type="PDB" id="8G38">
    <property type="method" value="EM"/>
    <property type="resolution" value="3.20 A"/>
    <property type="chains" value="l=2-115"/>
</dbReference>
<dbReference type="PDB" id="8G6W">
    <property type="method" value="EM"/>
    <property type="resolution" value="2.02 A"/>
    <property type="chains" value="M=1-118"/>
</dbReference>
<dbReference type="PDB" id="8G7P">
    <property type="method" value="EM"/>
    <property type="resolution" value="2.90 A"/>
    <property type="chains" value="m=1-118"/>
</dbReference>
<dbReference type="PDB" id="8G7Q">
    <property type="method" value="EM"/>
    <property type="resolution" value="3.10 A"/>
    <property type="chains" value="m=1-118"/>
</dbReference>
<dbReference type="PDB" id="8G7R">
    <property type="method" value="EM"/>
    <property type="resolution" value="2.80 A"/>
    <property type="chains" value="m=1-118"/>
</dbReference>
<dbReference type="PDB" id="8G7S">
    <property type="method" value="EM"/>
    <property type="resolution" value="3.10 A"/>
    <property type="chains" value="m=1-118"/>
</dbReference>
<dbReference type="PDB" id="8GHU">
    <property type="method" value="EM"/>
    <property type="resolution" value="3.00 A"/>
    <property type="chains" value="m=2-94"/>
</dbReference>
<dbReference type="PDB" id="8HSP">
    <property type="method" value="EM"/>
    <property type="resolution" value="2.32 A"/>
    <property type="chains" value="M=1-118"/>
</dbReference>
<dbReference type="PDB" id="8HTZ">
    <property type="method" value="EM"/>
    <property type="resolution" value="2.40 A"/>
    <property type="chains" value="M=1-118"/>
</dbReference>
<dbReference type="PDB" id="8HU1">
    <property type="method" value="EM"/>
    <property type="resolution" value="2.69 A"/>
    <property type="chains" value="M=1-118"/>
</dbReference>
<dbReference type="PDB" id="8IFB">
    <property type="method" value="EM"/>
    <property type="resolution" value="2.43 A"/>
    <property type="chains" value="M=1-118"/>
</dbReference>
<dbReference type="PDB" id="8IFC">
    <property type="method" value="EM"/>
    <property type="resolution" value="2.90 A"/>
    <property type="chains" value="M=1-118"/>
</dbReference>
<dbReference type="PDB" id="8JSG">
    <property type="method" value="EM"/>
    <property type="resolution" value="4.60 A"/>
    <property type="chains" value="s=2-115"/>
</dbReference>
<dbReference type="PDB" id="8K3O">
    <property type="method" value="EM"/>
    <property type="resolution" value="3.88 A"/>
    <property type="chains" value="M=1-118"/>
</dbReference>
<dbReference type="PDB" id="8K4E">
    <property type="method" value="EM"/>
    <property type="resolution" value="3.40 A"/>
    <property type="chains" value="M=1-118"/>
</dbReference>
<dbReference type="PDB" id="8P16">
    <property type="method" value="EM"/>
    <property type="resolution" value="2.77 A"/>
    <property type="chains" value="r=1-118"/>
</dbReference>
<dbReference type="PDB" id="8P17">
    <property type="method" value="EM"/>
    <property type="resolution" value="2.78 A"/>
    <property type="chains" value="r=1-118"/>
</dbReference>
<dbReference type="PDB" id="8P18">
    <property type="method" value="EM"/>
    <property type="resolution" value="2.77 A"/>
    <property type="chains" value="r=1-118"/>
</dbReference>
<dbReference type="PDB" id="8PEG">
    <property type="method" value="EM"/>
    <property type="resolution" value="3.30 A"/>
    <property type="chains" value="M=1-118"/>
</dbReference>
<dbReference type="PDB" id="8PHJ">
    <property type="method" value="EM"/>
    <property type="resolution" value="3.67 A"/>
    <property type="chains" value="M=1-118"/>
</dbReference>
<dbReference type="PDB" id="8PKL">
    <property type="method" value="EM"/>
    <property type="resolution" value="3.09 A"/>
    <property type="chains" value="M=1-118"/>
</dbReference>
<dbReference type="PDB" id="8PVA">
    <property type="method" value="EM"/>
    <property type="resolution" value="4.50 A"/>
    <property type="chains" value="M=1-118"/>
</dbReference>
<dbReference type="PDB" id="8Q4F">
    <property type="method" value="EM"/>
    <property type="resolution" value="3.10 A"/>
    <property type="chains" value="M=1-118"/>
</dbReference>
<dbReference type="PDB" id="8QBT">
    <property type="method" value="EM"/>
    <property type="resolution" value="2.20 A"/>
    <property type="chains" value="u=1-118"/>
</dbReference>
<dbReference type="PDB" id="8QK7">
    <property type="method" value="EM"/>
    <property type="resolution" value="2.77 A"/>
    <property type="chains" value="r=1-118"/>
</dbReference>
<dbReference type="PDB" id="8QOA">
    <property type="method" value="EM"/>
    <property type="resolution" value="2.00 A"/>
    <property type="chains" value="M=1-118"/>
</dbReference>
<dbReference type="PDB" id="8R3V">
    <property type="method" value="EM"/>
    <property type="resolution" value="3.28 A"/>
    <property type="chains" value="M1/M2=1-118"/>
</dbReference>
<dbReference type="PDB" id="8R6C">
    <property type="method" value="EM"/>
    <property type="resolution" value="2.20 A"/>
    <property type="chains" value="M=1-118"/>
</dbReference>
<dbReference type="PDB" id="8R8M">
    <property type="method" value="EM"/>
    <property type="resolution" value="2.40 A"/>
    <property type="chains" value="M=1-118"/>
</dbReference>
<dbReference type="PDB" id="8RCL">
    <property type="method" value="EM"/>
    <property type="resolution" value="3.49 A"/>
    <property type="chains" value="M1/M2=1-118"/>
</dbReference>
<dbReference type="PDB" id="8RCM">
    <property type="method" value="EM"/>
    <property type="resolution" value="3.59 A"/>
    <property type="chains" value="M1/M2=1-118"/>
</dbReference>
<dbReference type="PDB" id="8RCS">
    <property type="method" value="EM"/>
    <property type="resolution" value="4.46 A"/>
    <property type="chains" value="M1/M2=1-118"/>
</dbReference>
<dbReference type="PDB" id="8RCT">
    <property type="method" value="EM"/>
    <property type="resolution" value="5.32 A"/>
    <property type="chains" value="M1/M2=1-118"/>
</dbReference>
<dbReference type="PDB" id="8SYL">
    <property type="method" value="EM"/>
    <property type="resolution" value="2.90 A"/>
    <property type="chains" value="m=1-118"/>
</dbReference>
<dbReference type="PDB" id="8T5D">
    <property type="method" value="EM"/>
    <property type="resolution" value="3.20 A"/>
    <property type="chains" value="l=2-115"/>
</dbReference>
<dbReference type="PDB" id="8T5H">
    <property type="method" value="EM"/>
    <property type="resolution" value="3.30 A"/>
    <property type="chains" value="l=2-115"/>
</dbReference>
<dbReference type="PDB" id="8UPO">
    <property type="method" value="EM"/>
    <property type="resolution" value="5.50 A"/>
    <property type="chains" value="X=1-118"/>
</dbReference>
<dbReference type="PDB" id="8UPR">
    <property type="method" value="EM"/>
    <property type="resolution" value="5.30 A"/>
    <property type="chains" value="X=1-118"/>
</dbReference>
<dbReference type="PDB" id="8UQL">
    <property type="method" value="EM"/>
    <property type="resolution" value="3.20 A"/>
    <property type="chains" value="X=1-118"/>
</dbReference>
<dbReference type="PDB" id="8UQM">
    <property type="method" value="EM"/>
    <property type="resolution" value="5.30 A"/>
    <property type="chains" value="X=1-118"/>
</dbReference>
<dbReference type="PDB" id="8UQP">
    <property type="method" value="EM"/>
    <property type="resolution" value="3.80 A"/>
    <property type="chains" value="X=1-118"/>
</dbReference>
<dbReference type="PDB" id="8UR0">
    <property type="method" value="EM"/>
    <property type="resolution" value="3.40 A"/>
    <property type="chains" value="X=1-118"/>
</dbReference>
<dbReference type="PDB" id="8URH">
    <property type="method" value="EM"/>
    <property type="resolution" value="5.70 A"/>
    <property type="chains" value="X=1-118"/>
</dbReference>
<dbReference type="PDB" id="8URI">
    <property type="method" value="EM"/>
    <property type="resolution" value="5.30 A"/>
    <property type="chains" value="X=1-118"/>
</dbReference>
<dbReference type="PDB" id="8URX">
    <property type="method" value="EM"/>
    <property type="resolution" value="6.60 A"/>
    <property type="chains" value="X=1-118"/>
</dbReference>
<dbReference type="PDB" id="8URY">
    <property type="method" value="EM"/>
    <property type="resolution" value="3.10 A"/>
    <property type="chains" value="X=1-118"/>
</dbReference>
<dbReference type="PDB" id="8VS9">
    <property type="method" value="EM"/>
    <property type="resolution" value="3.90 A"/>
    <property type="chains" value="S13=1-118"/>
</dbReference>
<dbReference type="PDB" id="8VSA">
    <property type="method" value="EM"/>
    <property type="resolution" value="3.70 A"/>
    <property type="chains" value="S13=1-118"/>
</dbReference>
<dbReference type="PDB" id="8YUO">
    <property type="method" value="EM"/>
    <property type="resolution" value="2.25 A"/>
    <property type="chains" value="M=1-118"/>
</dbReference>
<dbReference type="PDB" id="8YUP">
    <property type="method" value="EM"/>
    <property type="resolution" value="2.39 A"/>
    <property type="chains" value="M=1-118"/>
</dbReference>
<dbReference type="PDB" id="8YUQ">
    <property type="method" value="EM"/>
    <property type="resolution" value="2.41 A"/>
    <property type="chains" value="M=1-118"/>
</dbReference>
<dbReference type="PDB" id="8YUR">
    <property type="method" value="EM"/>
    <property type="resolution" value="2.47 A"/>
    <property type="chains" value="M=1-118"/>
</dbReference>
<dbReference type="PDB" id="8YUS">
    <property type="method" value="EM"/>
    <property type="resolution" value="2.43 A"/>
    <property type="chains" value="M=1-118"/>
</dbReference>
<dbReference type="PDB" id="9DUK">
    <property type="method" value="EM"/>
    <property type="resolution" value="2.56 A"/>
    <property type="chains" value="M=1-118"/>
</dbReference>
<dbReference type="PDB" id="9DUL">
    <property type="method" value="EM"/>
    <property type="resolution" value="2.56 A"/>
    <property type="chains" value="M=1-118"/>
</dbReference>
<dbReference type="PDB" id="9FBV">
    <property type="method" value="EM"/>
    <property type="resolution" value="2.40 A"/>
    <property type="chains" value="M=1-118"/>
</dbReference>
<dbReference type="PDB" id="9GFT">
    <property type="method" value="EM"/>
    <property type="resolution" value="3.10 A"/>
    <property type="chains" value="AL/F=1-118"/>
</dbReference>
<dbReference type="PDB" id="9GGR">
    <property type="method" value="EM"/>
    <property type="resolution" value="3.20 A"/>
    <property type="chains" value="AL/F=1-118"/>
</dbReference>
<dbReference type="PDB" id="9GUP">
    <property type="method" value="EM"/>
    <property type="resolution" value="2.80 A"/>
    <property type="chains" value="N=1-118"/>
</dbReference>
<dbReference type="PDB" id="9GUQ">
    <property type="method" value="EM"/>
    <property type="resolution" value="3.10 A"/>
    <property type="chains" value="N=1-118"/>
</dbReference>
<dbReference type="PDB" id="9GUS">
    <property type="method" value="EM"/>
    <property type="resolution" value="3.50 A"/>
    <property type="chains" value="N=1-118"/>
</dbReference>
<dbReference type="PDB" id="9GUT">
    <property type="method" value="EM"/>
    <property type="resolution" value="2.80 A"/>
    <property type="chains" value="N=1-118"/>
</dbReference>
<dbReference type="PDB" id="9GUU">
    <property type="method" value="EM"/>
    <property type="resolution" value="2.50 A"/>
    <property type="chains" value="N=1-118"/>
</dbReference>
<dbReference type="PDB" id="9GUV">
    <property type="method" value="EM"/>
    <property type="resolution" value="3.00 A"/>
    <property type="chains" value="N=1-118"/>
</dbReference>
<dbReference type="PDB" id="9GUW">
    <property type="method" value="EM"/>
    <property type="resolution" value="3.10 A"/>
    <property type="chains" value="N=1-118"/>
</dbReference>
<dbReference type="PDB" id="9GUX">
    <property type="method" value="EM"/>
    <property type="resolution" value="3.30 A"/>
    <property type="chains" value="N=1-118"/>
</dbReference>
<dbReference type="PDB" id="9MOR">
    <property type="method" value="EM"/>
    <property type="resolution" value="2.65 A"/>
    <property type="chains" value="r=1-118"/>
</dbReference>
<dbReference type="PDB" id="9MQ4">
    <property type="method" value="EM"/>
    <property type="resolution" value="2.78 A"/>
    <property type="chains" value="r=1-118"/>
</dbReference>
<dbReference type="PDBsum" id="2YKR"/>
<dbReference type="PDBsum" id="3J9Y"/>
<dbReference type="PDBsum" id="3J9Z"/>
<dbReference type="PDBsum" id="3JA1"/>
<dbReference type="PDBsum" id="3JBU"/>
<dbReference type="PDBsum" id="3JBV"/>
<dbReference type="PDBsum" id="3JCD"/>
<dbReference type="PDBsum" id="3JCE"/>
<dbReference type="PDBsum" id="3JCJ"/>
<dbReference type="PDBsum" id="3JCN"/>
<dbReference type="PDBsum" id="4A2I"/>
<dbReference type="PDBsum" id="4ADV"/>
<dbReference type="PDBsum" id="4U1U"/>
<dbReference type="PDBsum" id="4U1V"/>
<dbReference type="PDBsum" id="4U20"/>
<dbReference type="PDBsum" id="4U24"/>
<dbReference type="PDBsum" id="4U25"/>
<dbReference type="PDBsum" id="4U26"/>
<dbReference type="PDBsum" id="4U27"/>
<dbReference type="PDBsum" id="4V47"/>
<dbReference type="PDBsum" id="4V48"/>
<dbReference type="PDBsum" id="4V4H"/>
<dbReference type="PDBsum" id="4V4Q"/>
<dbReference type="PDBsum" id="4V4V"/>
<dbReference type="PDBsum" id="4V4W"/>
<dbReference type="PDBsum" id="4V50"/>
<dbReference type="PDBsum" id="4V52"/>
<dbReference type="PDBsum" id="4V53"/>
<dbReference type="PDBsum" id="4V54"/>
<dbReference type="PDBsum" id="4V55"/>
<dbReference type="PDBsum" id="4V56"/>
<dbReference type="PDBsum" id="4V57"/>
<dbReference type="PDBsum" id="4V5B"/>
<dbReference type="PDBsum" id="4V5H"/>
<dbReference type="PDBsum" id="4V5Y"/>
<dbReference type="PDBsum" id="4V64"/>
<dbReference type="PDBsum" id="4V65"/>
<dbReference type="PDBsum" id="4V66"/>
<dbReference type="PDBsum" id="4V69"/>
<dbReference type="PDBsum" id="4V6C"/>
<dbReference type="PDBsum" id="4V6D"/>
<dbReference type="PDBsum" id="4V6E"/>
<dbReference type="PDBsum" id="4V6K"/>
<dbReference type="PDBsum" id="4V6L"/>
<dbReference type="PDBsum" id="4V6N"/>
<dbReference type="PDBsum" id="4V6O"/>
<dbReference type="PDBsum" id="4V6P"/>
<dbReference type="PDBsum" id="4V6Q"/>
<dbReference type="PDBsum" id="4V6R"/>
<dbReference type="PDBsum" id="4V6S"/>
<dbReference type="PDBsum" id="4V6T"/>
<dbReference type="PDBsum" id="4V6V"/>
<dbReference type="PDBsum" id="4V6Y"/>
<dbReference type="PDBsum" id="4V6Z"/>
<dbReference type="PDBsum" id="4V70"/>
<dbReference type="PDBsum" id="4V71"/>
<dbReference type="PDBsum" id="4V72"/>
<dbReference type="PDBsum" id="4V73"/>
<dbReference type="PDBsum" id="4V74"/>
<dbReference type="PDBsum" id="4V75"/>
<dbReference type="PDBsum" id="4V76"/>
<dbReference type="PDBsum" id="4V77"/>
<dbReference type="PDBsum" id="4V78"/>
<dbReference type="PDBsum" id="4V79"/>
<dbReference type="PDBsum" id="4V7A"/>
<dbReference type="PDBsum" id="4V7B"/>
<dbReference type="PDBsum" id="4V7C"/>
<dbReference type="PDBsum" id="4V7D"/>
<dbReference type="PDBsum" id="4V7I"/>
<dbReference type="PDBsum" id="4V7S"/>
<dbReference type="PDBsum" id="4V7T"/>
<dbReference type="PDBsum" id="4V7U"/>
<dbReference type="PDBsum" id="4V7V"/>
<dbReference type="PDBsum" id="4V85"/>
<dbReference type="PDBsum" id="4V89"/>
<dbReference type="PDBsum" id="4V9C"/>
<dbReference type="PDBsum" id="4V9D"/>
<dbReference type="PDBsum" id="4V9O"/>
<dbReference type="PDBsum" id="4V9P"/>
<dbReference type="PDBsum" id="4WF1"/>
<dbReference type="PDBsum" id="4WOI"/>
<dbReference type="PDBsum" id="4WWW"/>
<dbReference type="PDBsum" id="4YBB"/>
<dbReference type="PDBsum" id="5AFI"/>
<dbReference type="PDBsum" id="5H5U"/>
<dbReference type="PDBsum" id="5IQR"/>
<dbReference type="PDBsum" id="5IT8"/>
<dbReference type="PDBsum" id="5J5B"/>
<dbReference type="PDBsum" id="5J7L"/>
<dbReference type="PDBsum" id="5J88"/>
<dbReference type="PDBsum" id="5J8A"/>
<dbReference type="PDBsum" id="5J91"/>
<dbReference type="PDBsum" id="5JC9"/>
<dbReference type="PDBsum" id="5JTE"/>
<dbReference type="PDBsum" id="5JU8"/>
<dbReference type="PDBsum" id="5KCR"/>
<dbReference type="PDBsum" id="5KCS"/>
<dbReference type="PDBsum" id="5KPS"/>
<dbReference type="PDBsum" id="5KPV"/>
<dbReference type="PDBsum" id="5KPW"/>
<dbReference type="PDBsum" id="5KPX"/>
<dbReference type="PDBsum" id="5L3P"/>
<dbReference type="PDBsum" id="5LZA"/>
<dbReference type="PDBsum" id="5LZB"/>
<dbReference type="PDBsum" id="5LZC"/>
<dbReference type="PDBsum" id="5LZD"/>
<dbReference type="PDBsum" id="5LZE"/>
<dbReference type="PDBsum" id="5LZF"/>
<dbReference type="PDBsum" id="5MDV"/>
<dbReference type="PDBsum" id="5MDW"/>
<dbReference type="PDBsum" id="5MDY"/>
<dbReference type="PDBsum" id="5MDZ"/>
<dbReference type="PDBsum" id="5ME0"/>
<dbReference type="PDBsum" id="5ME1"/>
<dbReference type="PDBsum" id="5MGP"/>
<dbReference type="PDBsum" id="5MY1"/>
<dbReference type="PDBsum" id="5NO2"/>
<dbReference type="PDBsum" id="5NO3"/>
<dbReference type="PDBsum" id="5NO4"/>
<dbReference type="PDBsum" id="5NP6"/>
<dbReference type="PDBsum" id="5NWY"/>
<dbReference type="PDBsum" id="5O2R"/>
<dbReference type="PDBsum" id="5U4I"/>
<dbReference type="PDBsum" id="5U9F"/>
<dbReference type="PDBsum" id="5U9G"/>
<dbReference type="PDBsum" id="5UYK"/>
<dbReference type="PDBsum" id="5UYL"/>
<dbReference type="PDBsum" id="5UYM"/>
<dbReference type="PDBsum" id="5UYN"/>
<dbReference type="PDBsum" id="5UYP"/>
<dbReference type="PDBsum" id="5UYQ"/>
<dbReference type="PDBsum" id="5UZ4"/>
<dbReference type="PDBsum" id="5WDT"/>
<dbReference type="PDBsum" id="5WE4"/>
<dbReference type="PDBsum" id="5WE6"/>
<dbReference type="PDBsum" id="5WF0"/>
<dbReference type="PDBsum" id="5WFK"/>
<dbReference type="PDBsum" id="5WFS"/>
<dbReference type="PDBsum" id="6AWB"/>
<dbReference type="PDBsum" id="6AWC"/>
<dbReference type="PDBsum" id="6AWD"/>
<dbReference type="PDBsum" id="6BU8"/>
<dbReference type="PDBsum" id="6BY1"/>
<dbReference type="PDBsum" id="6C4I"/>
<dbReference type="PDBsum" id="6DNC"/>
<dbReference type="PDBsum" id="6ENF"/>
<dbReference type="PDBsum" id="6ENJ"/>
<dbReference type="PDBsum" id="6ENU"/>
<dbReference type="PDBsum" id="6GWT"/>
<dbReference type="PDBsum" id="6GXM"/>
<dbReference type="PDBsum" id="6GXN"/>
<dbReference type="PDBsum" id="6GXO"/>
<dbReference type="PDBsum" id="6GXP"/>
<dbReference type="PDBsum" id="6H4N"/>
<dbReference type="PDBsum" id="6H58"/>
<dbReference type="PDBsum" id="6HRM"/>
<dbReference type="PDBsum" id="6I7V"/>
<dbReference type="PDBsum" id="6O7K"/>
<dbReference type="PDBsum" id="6O9J"/>
<dbReference type="PDBsum" id="6O9K"/>
<dbReference type="PDBsum" id="6OFX"/>
<dbReference type="PDBsum" id="6OG7"/>
<dbReference type="PDBsum" id="6OGF"/>
<dbReference type="PDBsum" id="6OGG"/>
<dbReference type="PDBsum" id="6OGI"/>
<dbReference type="PDBsum" id="6OM6"/>
<dbReference type="PDBsum" id="6ORE"/>
<dbReference type="PDBsum" id="6ORL"/>
<dbReference type="PDBsum" id="6OSK"/>
<dbReference type="PDBsum" id="6OSQ"/>
<dbReference type="PDBsum" id="6OST"/>
<dbReference type="PDBsum" id="6OT3"/>
<dbReference type="PDBsum" id="6OUO"/>
<dbReference type="PDBsum" id="6Q98"/>
<dbReference type="PDBsum" id="6Q9A"/>
<dbReference type="PDBsum" id="6SZS"/>
<dbReference type="PDBsum" id="6TBV"/>
<dbReference type="PDBsum" id="6TC3"/>
<dbReference type="PDBsum" id="6VU3"/>
<dbReference type="PDBsum" id="6VWL"/>
<dbReference type="PDBsum" id="6VWM"/>
<dbReference type="PDBsum" id="6VWN"/>
<dbReference type="PDBsum" id="6VYQ"/>
<dbReference type="PDBsum" id="6VYR"/>
<dbReference type="PDBsum" id="6VYS"/>
<dbReference type="PDBsum" id="6VYT"/>
<dbReference type="PDBsum" id="6VYU"/>
<dbReference type="PDBsum" id="6VYW"/>
<dbReference type="PDBsum" id="6VYX"/>
<dbReference type="PDBsum" id="6VYY"/>
<dbReference type="PDBsum" id="6VYZ"/>
<dbReference type="PDBsum" id="6VZ2"/>
<dbReference type="PDBsum" id="6VZ3"/>
<dbReference type="PDBsum" id="6VZ5"/>
<dbReference type="PDBsum" id="6VZ7"/>
<dbReference type="PDBsum" id="6VZJ"/>
<dbReference type="PDBsum" id="6W6K"/>
<dbReference type="PDBsum" id="6W77"/>
<dbReference type="PDBsum" id="6W7M"/>
<dbReference type="PDBsum" id="6W7N"/>
<dbReference type="PDBsum" id="6WD0"/>
<dbReference type="PDBsum" id="6WD1"/>
<dbReference type="PDBsum" id="6WD2"/>
<dbReference type="PDBsum" id="6WD3"/>
<dbReference type="PDBsum" id="6WD4"/>
<dbReference type="PDBsum" id="6WD5"/>
<dbReference type="PDBsum" id="6WD6"/>
<dbReference type="PDBsum" id="6WD7"/>
<dbReference type="PDBsum" id="6WD8"/>
<dbReference type="PDBsum" id="6WD9"/>
<dbReference type="PDBsum" id="6WDA"/>
<dbReference type="PDBsum" id="6WDB"/>
<dbReference type="PDBsum" id="6WDC"/>
<dbReference type="PDBsum" id="6WDD"/>
<dbReference type="PDBsum" id="6WDE"/>
<dbReference type="PDBsum" id="6WDF"/>
<dbReference type="PDBsum" id="6WDG"/>
<dbReference type="PDBsum" id="6WDH"/>
<dbReference type="PDBsum" id="6WDI"/>
<dbReference type="PDBsum" id="6WDJ"/>
<dbReference type="PDBsum" id="6WDK"/>
<dbReference type="PDBsum" id="6WDL"/>
<dbReference type="PDBsum" id="6WDM"/>
<dbReference type="PDBsum" id="6WNV"/>
<dbReference type="PDBsum" id="6WNW"/>
<dbReference type="PDBsum" id="6X6T"/>
<dbReference type="PDBsum" id="6X7F"/>
<dbReference type="PDBsum" id="6X7K"/>
<dbReference type="PDBsum" id="6X9Q"/>
<dbReference type="PDBsum" id="6XDQ"/>
<dbReference type="PDBsum" id="6XDR"/>
<dbReference type="PDBsum" id="6XE0"/>
<dbReference type="PDBsum" id="6XGF"/>
<dbReference type="PDBsum" id="6XII"/>
<dbReference type="PDBsum" id="6XIJ"/>
<dbReference type="PDBsum" id="6XZA"/>
<dbReference type="PDBsum" id="6XZB"/>
<dbReference type="PDBsum" id="6Y69"/>
<dbReference type="PDBsum" id="6ZTJ"/>
<dbReference type="PDBsum" id="6ZTL"/>
<dbReference type="PDBsum" id="6ZTM"/>
<dbReference type="PDBsum" id="6ZTN"/>
<dbReference type="PDBsum" id="6ZTO"/>
<dbReference type="PDBsum" id="6ZTP"/>
<dbReference type="PDBsum" id="6ZU1"/>
<dbReference type="PDBsum" id="7ABZ"/>
<dbReference type="PDBsum" id="7AC7"/>
<dbReference type="PDBsum" id="7ACJ"/>
<dbReference type="PDBsum" id="7ACR"/>
<dbReference type="PDBsum" id="7AF3"/>
<dbReference type="PDBsum" id="7AF5"/>
<dbReference type="PDBsum" id="7AF8"/>
<dbReference type="PDBsum" id="7AFA"/>
<dbReference type="PDBsum" id="7AFD"/>
<dbReference type="PDBsum" id="7AFH"/>
<dbReference type="PDBsum" id="7AFK"/>
<dbReference type="PDBsum" id="7AFN"/>
<dbReference type="PDBsum" id="7B5K"/>
<dbReference type="PDBsum" id="7BOE"/>
<dbReference type="PDBsum" id="7BOH"/>
<dbReference type="PDBsum" id="7D6Z"/>
<dbReference type="PDBsum" id="7D80"/>
<dbReference type="PDBsum" id="7JSS"/>
<dbReference type="PDBsum" id="7JSW"/>
<dbReference type="PDBsum" id="7JSZ"/>
<dbReference type="PDBsum" id="7JT1"/>
<dbReference type="PDBsum" id="7JT2"/>
<dbReference type="PDBsum" id="7JT3"/>
<dbReference type="PDBsum" id="7K00"/>
<dbReference type="PDBsum" id="7K50"/>
<dbReference type="PDBsum" id="7K51"/>
<dbReference type="PDBsum" id="7K52"/>
<dbReference type="PDBsum" id="7K53"/>
<dbReference type="PDBsum" id="7K54"/>
<dbReference type="PDBsum" id="7K55"/>
<dbReference type="PDBsum" id="7LV0"/>
<dbReference type="PDBsum" id="7M5D"/>
<dbReference type="PDBsum" id="7N1P"/>
<dbReference type="PDBsum" id="7N2C"/>
<dbReference type="PDBsum" id="7N2U"/>
<dbReference type="PDBsum" id="7N2V"/>
<dbReference type="PDBsum" id="7N30"/>
<dbReference type="PDBsum" id="7N31"/>
<dbReference type="PDBsum" id="7NAR"/>
<dbReference type="PDBsum" id="7NAT"/>
<dbReference type="PDBsum" id="7NAU"/>
<dbReference type="PDBsum" id="7NAV"/>
<dbReference type="PDBsum" id="7NAX"/>
<dbReference type="PDBsum" id="7NBU"/>
<dbReference type="PDBsum" id="7O19"/>
<dbReference type="PDBsum" id="7O1A"/>
<dbReference type="PDBsum" id="7O1C"/>
<dbReference type="PDBsum" id="7OE0"/>
<dbReference type="PDBsum" id="7OE1"/>
<dbReference type="PDBsum" id="7OIZ"/>
<dbReference type="PDBsum" id="7OJ0"/>
<dbReference type="PDBsum" id="7P3K"/>
<dbReference type="PDBsum" id="7PJV"/>
<dbReference type="PDBsum" id="7PJY"/>
<dbReference type="PDBsum" id="7QG8"/>
<dbReference type="PDBsum" id="7QGH"/>
<dbReference type="PDBsum" id="7QGN"/>
<dbReference type="PDBsum" id="7QGR"/>
<dbReference type="PDBsum" id="7S1G"/>
<dbReference type="PDBsum" id="7S1H"/>
<dbReference type="PDBsum" id="7S1I"/>
<dbReference type="PDBsum" id="7S1J"/>
<dbReference type="PDBsum" id="7S1K"/>
<dbReference type="PDBsum" id="7SA4"/>
<dbReference type="PDBsum" id="7SS9"/>
<dbReference type="PDBsum" id="7SSD"/>
<dbReference type="PDBsum" id="7SSL"/>
<dbReference type="PDBsum" id="7SSN"/>
<dbReference type="PDBsum" id="7SSO"/>
<dbReference type="PDBsum" id="7SSW"/>
<dbReference type="PDBsum" id="7ST2"/>
<dbReference type="PDBsum" id="7ST6"/>
<dbReference type="PDBsum" id="7ST7"/>
<dbReference type="PDBsum" id="7TOS"/>
<dbReference type="PDBsum" id="7UG7"/>
<dbReference type="PDBsum" id="7UPH"/>
<dbReference type="PDBsum" id="7Y7C"/>
<dbReference type="PDBsum" id="7Y7D"/>
<dbReference type="PDBsum" id="7Y7E"/>
<dbReference type="PDBsum" id="7Y7F"/>
<dbReference type="PDBsum" id="7Y7G"/>
<dbReference type="PDBsum" id="7Y7H"/>
<dbReference type="PDBsum" id="7ZTA"/>
<dbReference type="PDBsum" id="8A3L"/>
<dbReference type="PDBsum" id="8AKN"/>
<dbReference type="PDBsum" id="8AM9"/>
<dbReference type="PDBsum" id="8AYE"/>
<dbReference type="PDBsum" id="8B0X"/>
<dbReference type="PDBsum" id="8B7Y"/>
<dbReference type="PDBsum" id="8BF7"/>
<dbReference type="PDBsum" id="8BGE"/>
<dbReference type="PDBsum" id="8BGH"/>
<dbReference type="PDBsum" id="8BH4"/>
<dbReference type="PDBsum" id="8BHJ"/>
<dbReference type="PDBsum" id="8BHL"/>
<dbReference type="PDBsum" id="8BHN"/>
<dbReference type="PDBsum" id="8BHP"/>
<dbReference type="PDBsum" id="8BIL"/>
<dbReference type="PDBsum" id="8BIM"/>
<dbReference type="PDBsum" id="8CA7"/>
<dbReference type="PDBsum" id="8CAZ"/>
<dbReference type="PDBsum" id="8CF1"/>
<dbReference type="PDBsum" id="8CF8"/>
<dbReference type="PDBsum" id="8CGI"/>
<dbReference type="PDBsum" id="8EIU"/>
<dbReference type="PDBsum" id="8EKC"/>
<dbReference type="PDBsum" id="8EMM"/>
<dbReference type="PDBsum" id="8EYQ"/>
<dbReference type="PDBsum" id="8EYT"/>
<dbReference type="PDBsum" id="8FIZ"/>
<dbReference type="PDBsum" id="8FTO"/>
<dbReference type="PDBsum" id="8FZD"/>
<dbReference type="PDBsum" id="8FZE"/>
<dbReference type="PDBsum" id="8FZF"/>
<dbReference type="PDBsum" id="8FZG"/>
<dbReference type="PDBsum" id="8FZH"/>
<dbReference type="PDBsum" id="8FZI"/>
<dbReference type="PDBsum" id="8FZJ"/>
<dbReference type="PDBsum" id="8G2U"/>
<dbReference type="PDBsum" id="8G31"/>
<dbReference type="PDBsum" id="8G34"/>
<dbReference type="PDBsum" id="8G38"/>
<dbReference type="PDBsum" id="8G6W"/>
<dbReference type="PDBsum" id="8G7P"/>
<dbReference type="PDBsum" id="8G7Q"/>
<dbReference type="PDBsum" id="8G7R"/>
<dbReference type="PDBsum" id="8G7S"/>
<dbReference type="PDBsum" id="8GHU"/>
<dbReference type="PDBsum" id="8HSP"/>
<dbReference type="PDBsum" id="8HTZ"/>
<dbReference type="PDBsum" id="8HU1"/>
<dbReference type="PDBsum" id="8IFB"/>
<dbReference type="PDBsum" id="8IFC"/>
<dbReference type="PDBsum" id="8JSG"/>
<dbReference type="PDBsum" id="8K3O"/>
<dbReference type="PDBsum" id="8K4E"/>
<dbReference type="PDBsum" id="8P16"/>
<dbReference type="PDBsum" id="8P17"/>
<dbReference type="PDBsum" id="8P18"/>
<dbReference type="PDBsum" id="8PEG"/>
<dbReference type="PDBsum" id="8PHJ"/>
<dbReference type="PDBsum" id="8PKL"/>
<dbReference type="PDBsum" id="8PVA"/>
<dbReference type="PDBsum" id="8Q4F"/>
<dbReference type="PDBsum" id="8QBT"/>
<dbReference type="PDBsum" id="8QK7"/>
<dbReference type="PDBsum" id="8QOA"/>
<dbReference type="PDBsum" id="8R3V"/>
<dbReference type="PDBsum" id="8R6C"/>
<dbReference type="PDBsum" id="8R8M"/>
<dbReference type="PDBsum" id="8RCL"/>
<dbReference type="PDBsum" id="8RCM"/>
<dbReference type="PDBsum" id="8RCS"/>
<dbReference type="PDBsum" id="8RCT"/>
<dbReference type="PDBsum" id="8SYL"/>
<dbReference type="PDBsum" id="8T5D"/>
<dbReference type="PDBsum" id="8T5H"/>
<dbReference type="PDBsum" id="8UPO"/>
<dbReference type="PDBsum" id="8UPR"/>
<dbReference type="PDBsum" id="8UQL"/>
<dbReference type="PDBsum" id="8UQM"/>
<dbReference type="PDBsum" id="8UQP"/>
<dbReference type="PDBsum" id="8UR0"/>
<dbReference type="PDBsum" id="8URH"/>
<dbReference type="PDBsum" id="8URI"/>
<dbReference type="PDBsum" id="8URX"/>
<dbReference type="PDBsum" id="8URY"/>
<dbReference type="PDBsum" id="8VS9"/>
<dbReference type="PDBsum" id="8VSA"/>
<dbReference type="PDBsum" id="8YUO"/>
<dbReference type="PDBsum" id="8YUP"/>
<dbReference type="PDBsum" id="8YUQ"/>
<dbReference type="PDBsum" id="8YUR"/>
<dbReference type="PDBsum" id="8YUS"/>
<dbReference type="PDBsum" id="9DUK"/>
<dbReference type="PDBsum" id="9DUL"/>
<dbReference type="PDBsum" id="9FBV"/>
<dbReference type="PDBsum" id="9GFT"/>
<dbReference type="PDBsum" id="9GGR"/>
<dbReference type="PDBsum" id="9GUP"/>
<dbReference type="PDBsum" id="9GUQ"/>
<dbReference type="PDBsum" id="9GUS"/>
<dbReference type="PDBsum" id="9GUT"/>
<dbReference type="PDBsum" id="9GUU"/>
<dbReference type="PDBsum" id="9GUV"/>
<dbReference type="PDBsum" id="9GUW"/>
<dbReference type="PDBsum" id="9GUX"/>
<dbReference type="PDBsum" id="9MOR"/>
<dbReference type="PDBsum" id="9MQ4"/>
<dbReference type="EMDB" id="EMD-0076"/>
<dbReference type="EMDB" id="EMD-0080"/>
<dbReference type="EMDB" id="EMD-0081"/>
<dbReference type="EMDB" id="EMD-0082"/>
<dbReference type="EMDB" id="EMD-0083"/>
<dbReference type="EMDB" id="EMD-0137"/>
<dbReference type="EMDB" id="EMD-0139"/>
<dbReference type="EMDB" id="EMD-0261"/>
<dbReference type="EMDB" id="EMD-10353"/>
<dbReference type="EMDB" id="EMD-10453"/>
<dbReference type="EMDB" id="EMD-10458"/>
<dbReference type="EMDB" id="EMD-10656"/>
<dbReference type="EMDB" id="EMD-10657"/>
<dbReference type="EMDB" id="EMD-10705"/>
<dbReference type="EMDB" id="EMD-11419"/>
<dbReference type="EMDB" id="EMD-11710"/>
<dbReference type="EMDB" id="EMD-11713"/>
<dbReference type="EMDB" id="EMD-11717"/>
<dbReference type="EMDB" id="EMD-11718"/>
<dbReference type="EMDB" id="EMD-12035"/>
<dbReference type="EMDB" id="EMD-12240"/>
<dbReference type="EMDB" id="EMD-12243"/>
<dbReference type="EMDB" id="EMD-12245"/>
<dbReference type="EMDB" id="EMD-12247"/>
<dbReference type="EMDB" id="EMD-12248"/>
<dbReference type="EMDB" id="EMD-12249"/>
<dbReference type="EMDB" id="EMD-12261"/>
<dbReference type="EMDB" id="EMD-12693"/>
<dbReference type="EMDB" id="EMD-12694"/>
<dbReference type="EMDB" id="EMD-12695"/>
<dbReference type="EMDB" id="EMD-12936"/>
<dbReference type="EMDB" id="EMD-12937"/>
<dbReference type="EMDB" id="EMD-13180"/>
<dbReference type="EMDB" id="EMD-13461"/>
<dbReference type="EMDB" id="EMD-13464"/>
<dbReference type="EMDB" id="EMD-13952"/>
<dbReference type="EMDB" id="EMD-13955"/>
<dbReference type="EMDB" id="EMD-14956"/>
<dbReference type="EMDB" id="EMD-15116"/>
<dbReference type="EMDB" id="EMD-15712"/>
<dbReference type="EMDB" id="EMD-15793"/>
<dbReference type="EMDB" id="EMD-15905"/>
<dbReference type="EMDB" id="EMD-16015"/>
<dbReference type="EMDB" id="EMD-16029"/>
<dbReference type="EMDB" id="EMD-16031"/>
<dbReference type="EMDB" id="EMD-16047"/>
<dbReference type="EMDB" id="EMD-16057"/>
<dbReference type="EMDB" id="EMD-16059"/>
<dbReference type="EMDB" id="EMD-16062"/>
<dbReference type="EMDB" id="EMD-16065"/>
<dbReference type="EMDB" id="EMD-16081"/>
<dbReference type="EMDB" id="EMD-16082"/>
<dbReference type="EMDB" id="EMD-16520"/>
<dbReference type="EMDB" id="EMD-16536"/>
<dbReference type="EMDB" id="EMD-16615"/>
<dbReference type="EMDB" id="EMD-16620"/>
<dbReference type="EMDB" id="EMD-16644"/>
<dbReference type="EMDB" id="EMD-17346"/>
<dbReference type="EMDB" id="EMD-17347"/>
<dbReference type="EMDB" id="EMD-17348"/>
<dbReference type="EMDB" id="EMD-17631"/>
<dbReference type="EMDB" id="EMD-17667"/>
<dbReference type="EMDB" id="EMD-17743"/>
<dbReference type="EMDB" id="EMD-17959"/>
<dbReference type="EMDB" id="EMD-18145"/>
<dbReference type="EMDB" id="EMD-18320"/>
<dbReference type="EMDB" id="EMD-18458"/>
<dbReference type="EMDB" id="EMD-18534"/>
<dbReference type="EMDB" id="EMD-18875"/>
<dbReference type="EMDB" id="EMD-18950"/>
<dbReference type="EMDB" id="EMD-19004"/>
<dbReference type="EMDB" id="EMD-19054"/>
<dbReference type="EMDB" id="EMD-19055"/>
<dbReference type="EMDB" id="EMD-19058"/>
<dbReference type="EMDB" id="EMD-19059"/>
<dbReference type="EMDB" id="EMD-20048"/>
<dbReference type="EMDB" id="EMD-20052"/>
<dbReference type="EMDB" id="EMD-21420"/>
<dbReference type="EMDB" id="EMD-21421"/>
<dbReference type="EMDB" id="EMD-21422"/>
<dbReference type="EMDB" id="EMD-21558"/>
<dbReference type="EMDB" id="EMD-21569"/>
<dbReference type="EMDB" id="EMD-21571"/>
<dbReference type="EMDB" id="EMD-21572"/>
<dbReference type="EMDB" id="EMD-21625"/>
<dbReference type="EMDB" id="EMD-21630"/>
<dbReference type="EMDB" id="EMD-21631"/>
<dbReference type="EMDB" id="EMD-21632"/>
<dbReference type="EMDB" id="EMD-21633"/>
<dbReference type="EMDB" id="EMD-21634"/>
<dbReference type="EMDB" id="EMD-21635"/>
<dbReference type="EMDB" id="EMD-21636"/>
<dbReference type="EMDB" id="EMD-21637"/>
<dbReference type="EMDB" id="EMD-21638"/>
<dbReference type="EMDB" id="EMD-21639"/>
<dbReference type="EMDB" id="EMD-21640"/>
<dbReference type="EMDB" id="EMD-21641"/>
<dbReference type="EMDB" id="EMD-21857"/>
<dbReference type="EMDB" id="EMD-21858"/>
<dbReference type="EMDB" id="EMD-22143"/>
<dbReference type="EMDB" id="EMD-22459"/>
<dbReference type="EMDB" id="EMD-22461"/>
<dbReference type="EMDB" id="EMD-22464"/>
<dbReference type="EMDB" id="EMD-22466"/>
<dbReference type="EMDB" id="EMD-22469"/>
<dbReference type="EMDB" id="EMD-22472"/>
<dbReference type="EMDB" id="EMD-22669"/>
<dbReference type="EMDB" id="EMD-22670"/>
<dbReference type="EMDB" id="EMD-22671"/>
<dbReference type="EMDB" id="EMD-22672"/>
<dbReference type="EMDB" id="EMD-22673"/>
<dbReference type="EMDB" id="EMD-22674"/>
<dbReference type="EMDB" id="EMD-23528"/>
<dbReference type="EMDB" id="EMD-24120"/>
<dbReference type="EMDB" id="EMD-24132"/>
<dbReference type="EMDB" id="EMD-24133"/>
<dbReference type="EMDB" id="EMD-24134"/>
<dbReference type="EMDB" id="EMD-24135"/>
<dbReference type="EMDB" id="EMD-24136"/>
<dbReference type="EMDB" id="EMD-24803"/>
<dbReference type="EMDB" id="EMD-25405"/>
<dbReference type="EMDB" id="EMD-25407"/>
<dbReference type="EMDB" id="EMD-25409"/>
<dbReference type="EMDB" id="EMD-25410"/>
<dbReference type="EMDB" id="EMD-25411"/>
<dbReference type="EMDB" id="EMD-25415"/>
<dbReference type="EMDB" id="EMD-25418"/>
<dbReference type="EMDB" id="EMD-25420"/>
<dbReference type="EMDB" id="EMD-25421"/>
<dbReference type="EMDB" id="EMD-30598"/>
<dbReference type="EMDB" id="EMD-30611"/>
<dbReference type="EMDB" id="EMD-33660"/>
<dbReference type="EMDB" id="EMD-33661"/>
<dbReference type="EMDB" id="EMD-33662"/>
<dbReference type="EMDB" id="EMD-33663"/>
<dbReference type="EMDB" id="EMD-33664"/>
<dbReference type="EMDB" id="EMD-33665"/>
<dbReference type="EMDB" id="EMD-3489"/>
<dbReference type="EMDB" id="EMD-3490"/>
<dbReference type="EMDB" id="EMD-3492"/>
<dbReference type="EMDB" id="EMD-3493"/>
<dbReference type="EMDB" id="EMD-3494"/>
<dbReference type="EMDB" id="EMD-3495"/>
<dbReference type="EMDB" id="EMD-35001"/>
<dbReference type="EMDB" id="EMD-35020"/>
<dbReference type="EMDB" id="EMD-35022"/>
<dbReference type="EMDB" id="EMD-3508"/>
<dbReference type="EMDB" id="EMD-35411"/>
<dbReference type="EMDB" id="EMD-35412"/>
<dbReference type="EMDB" id="EMD-3580"/>
<dbReference type="EMDB" id="EMD-3661"/>
<dbReference type="EMDB" id="EMD-36619"/>
<dbReference type="EMDB" id="EMD-3662"/>
<dbReference type="EMDB" id="EMD-3663"/>
<dbReference type="EMDB" id="EMD-36854"/>
<dbReference type="EMDB" id="EMD-36883"/>
<dbReference type="EMDB" id="EMD-3713"/>
<dbReference type="EMDB" id="EMD-3730"/>
<dbReference type="EMDB" id="EMD-3898"/>
<dbReference type="EMDB" id="EMD-3899"/>
<dbReference type="EMDB" id="EMD-3903"/>
<dbReference type="EMDB" id="EMD-39577"/>
<dbReference type="EMDB" id="EMD-39578"/>
<dbReference type="EMDB" id="EMD-39579"/>
<dbReference type="EMDB" id="EMD-39580"/>
<dbReference type="EMDB" id="EMD-39581"/>
<dbReference type="EMDB" id="EMD-4001"/>
<dbReference type="EMDB" id="EMD-4121"/>
<dbReference type="EMDB" id="EMD-4122"/>
<dbReference type="EMDB" id="EMD-4123"/>
<dbReference type="EMDB" id="EMD-4124"/>
<dbReference type="EMDB" id="EMD-4125"/>
<dbReference type="EMDB" id="EMD-4126"/>
<dbReference type="EMDB" id="EMD-4477"/>
<dbReference type="EMDB" id="EMD-4478"/>
<dbReference type="EMDB" id="EMD-50296"/>
<dbReference type="EMDB" id="EMD-51318"/>
<dbReference type="EMDB" id="EMD-51340"/>
<dbReference type="EMDB" id="EMD-51615"/>
<dbReference type="EMDB" id="EMD-51616"/>
<dbReference type="EMDB" id="EMD-51618"/>
<dbReference type="EMDB" id="EMD-51619"/>
<dbReference type="EMDB" id="EMD-51620"/>
<dbReference type="EMDB" id="EMD-51621"/>
<dbReference type="EMDB" id="EMD-51622"/>
<dbReference type="EMDB" id="EMD-51623"/>
<dbReference type="EMDB" id="EMD-6667"/>
<dbReference type="EMDB" id="EMD-7289"/>
<dbReference type="EMDB" id="EMD-7341"/>
<dbReference type="EMDB" id="EMD-7970"/>
<dbReference type="EMDB" id="EMD-8107"/>
<dbReference type="EMDB" id="EMD-8175"/>
<dbReference type="EMDB" id="EMD-8176"/>
<dbReference type="EMDB" id="EMD-8237"/>
<dbReference type="EMDB" id="EMD-8238"/>
<dbReference type="EMDB" id="EMD-8279"/>
<dbReference type="EMDB" id="EMD-8280"/>
<dbReference type="EMDB" id="EMD-8281"/>
<dbReference type="EMDB" id="EMD-8282"/>
<dbReference type="EMDB" id="EMD-8505"/>
<dbReference type="EMDB" id="EMD-8615"/>
<dbReference type="EMDB" id="EMD-8616"/>
<dbReference type="EMDB" id="EMD-8617"/>
<dbReference type="EMDB" id="EMD-8618"/>
<dbReference type="EMDB" id="EMD-8619"/>
<dbReference type="EMDB" id="EMD-8620"/>
<dbReference type="EMDB" id="EMD-8813"/>
<dbReference type="EMDB" id="EMD-8814"/>
<dbReference type="EMDB" id="EMD-8815"/>
<dbReference type="EMDB" id="EMD-8828"/>
<dbReference type="SMR" id="P0A7S9"/>
<dbReference type="BioGRID" id="4263439">
    <property type="interactions" value="68"/>
</dbReference>
<dbReference type="BioGRID" id="852103">
    <property type="interactions" value="1"/>
</dbReference>
<dbReference type="ComplexPortal" id="CPX-3802">
    <property type="entry name" value="30S small ribosomal subunit"/>
</dbReference>
<dbReference type="DIP" id="DIP-35855N"/>
<dbReference type="FunCoup" id="P0A7S9">
    <property type="interactions" value="1111"/>
</dbReference>
<dbReference type="IntAct" id="P0A7S9">
    <property type="interactions" value="120"/>
</dbReference>
<dbReference type="STRING" id="511145.b3298"/>
<dbReference type="DrugBank" id="DB00560">
    <property type="generic name" value="Tigecycline"/>
</dbReference>
<dbReference type="jPOST" id="P0A7S9"/>
<dbReference type="PaxDb" id="511145-b3298"/>
<dbReference type="EnsemblBacteria" id="AAC76323">
    <property type="protein sequence ID" value="AAC76323"/>
    <property type="gene ID" value="b3298"/>
</dbReference>
<dbReference type="GeneID" id="93778689"/>
<dbReference type="GeneID" id="947791"/>
<dbReference type="KEGG" id="ecj:JW3260"/>
<dbReference type="KEGG" id="eco:b3298"/>
<dbReference type="KEGG" id="ecoc:C3026_17930"/>
<dbReference type="PATRIC" id="fig|1411691.4.peg.3433"/>
<dbReference type="EchoBASE" id="EB0905"/>
<dbReference type="eggNOG" id="COG0099">
    <property type="taxonomic scope" value="Bacteria"/>
</dbReference>
<dbReference type="HOGENOM" id="CLU_103849_1_2_6"/>
<dbReference type="InParanoid" id="P0A7S9"/>
<dbReference type="OMA" id="MNVKRLM"/>
<dbReference type="OrthoDB" id="9803610at2"/>
<dbReference type="PhylomeDB" id="P0A7S9"/>
<dbReference type="BioCyc" id="EcoCyc:EG10912-MONOMER"/>
<dbReference type="BioCyc" id="MetaCyc:EG10912-MONOMER"/>
<dbReference type="EvolutionaryTrace" id="P0A7S9"/>
<dbReference type="PRO" id="PR:P0A7S9"/>
<dbReference type="Proteomes" id="UP000000625">
    <property type="component" value="Chromosome"/>
</dbReference>
<dbReference type="GO" id="GO:0005737">
    <property type="term" value="C:cytoplasm"/>
    <property type="evidence" value="ECO:0000314"/>
    <property type="project" value="ComplexPortal"/>
</dbReference>
<dbReference type="GO" id="GO:0005829">
    <property type="term" value="C:cytosol"/>
    <property type="evidence" value="ECO:0000314"/>
    <property type="project" value="EcoCyc"/>
</dbReference>
<dbReference type="GO" id="GO:0022627">
    <property type="term" value="C:cytosolic small ribosomal subunit"/>
    <property type="evidence" value="ECO:0000314"/>
    <property type="project" value="EcoliWiki"/>
</dbReference>
<dbReference type="GO" id="GO:0015935">
    <property type="term" value="C:small ribosomal subunit"/>
    <property type="evidence" value="ECO:0000318"/>
    <property type="project" value="GO_Central"/>
</dbReference>
<dbReference type="GO" id="GO:0019843">
    <property type="term" value="F:rRNA binding"/>
    <property type="evidence" value="ECO:0007669"/>
    <property type="project" value="UniProtKB-UniRule"/>
</dbReference>
<dbReference type="GO" id="GO:0003735">
    <property type="term" value="F:structural constituent of ribosome"/>
    <property type="evidence" value="ECO:0007669"/>
    <property type="project" value="InterPro"/>
</dbReference>
<dbReference type="GO" id="GO:0000049">
    <property type="term" value="F:tRNA binding"/>
    <property type="evidence" value="ECO:0007669"/>
    <property type="project" value="UniProtKB-UniRule"/>
</dbReference>
<dbReference type="GO" id="GO:0002181">
    <property type="term" value="P:cytoplasmic translation"/>
    <property type="evidence" value="ECO:0000303"/>
    <property type="project" value="ComplexPortal"/>
</dbReference>
<dbReference type="FunFam" id="1.10.8.50:FF:000001">
    <property type="entry name" value="30S ribosomal protein S13"/>
    <property type="match status" value="1"/>
</dbReference>
<dbReference type="FunFam" id="4.10.910.10:FF:000001">
    <property type="entry name" value="30S ribosomal protein S13"/>
    <property type="match status" value="1"/>
</dbReference>
<dbReference type="Gene3D" id="1.10.8.50">
    <property type="match status" value="1"/>
</dbReference>
<dbReference type="Gene3D" id="4.10.910.10">
    <property type="entry name" value="30s ribosomal protein s13, domain 2"/>
    <property type="match status" value="1"/>
</dbReference>
<dbReference type="HAMAP" id="MF_01315">
    <property type="entry name" value="Ribosomal_uS13"/>
    <property type="match status" value="1"/>
</dbReference>
<dbReference type="InterPro" id="IPR027437">
    <property type="entry name" value="Rbsml_uS13_C"/>
</dbReference>
<dbReference type="InterPro" id="IPR001892">
    <property type="entry name" value="Ribosomal_uS13"/>
</dbReference>
<dbReference type="InterPro" id="IPR010979">
    <property type="entry name" value="Ribosomal_uS13-like_H2TH"/>
</dbReference>
<dbReference type="InterPro" id="IPR019980">
    <property type="entry name" value="Ribosomal_uS13_bac-type"/>
</dbReference>
<dbReference type="InterPro" id="IPR018269">
    <property type="entry name" value="Ribosomal_uS13_CS"/>
</dbReference>
<dbReference type="NCBIfam" id="TIGR03631">
    <property type="entry name" value="uS13_bact"/>
    <property type="match status" value="1"/>
</dbReference>
<dbReference type="PANTHER" id="PTHR10871">
    <property type="entry name" value="30S RIBOSOMAL PROTEIN S13/40S RIBOSOMAL PROTEIN S18"/>
    <property type="match status" value="1"/>
</dbReference>
<dbReference type="PANTHER" id="PTHR10871:SF1">
    <property type="entry name" value="SMALL RIBOSOMAL SUBUNIT PROTEIN US13M"/>
    <property type="match status" value="1"/>
</dbReference>
<dbReference type="Pfam" id="PF00416">
    <property type="entry name" value="Ribosomal_S13"/>
    <property type="match status" value="1"/>
</dbReference>
<dbReference type="PIRSF" id="PIRSF002134">
    <property type="entry name" value="Ribosomal_S13"/>
    <property type="match status" value="1"/>
</dbReference>
<dbReference type="SUPFAM" id="SSF46946">
    <property type="entry name" value="S13-like H2TH domain"/>
    <property type="match status" value="1"/>
</dbReference>
<dbReference type="PROSITE" id="PS00646">
    <property type="entry name" value="RIBOSOMAL_S13_1"/>
    <property type="match status" value="1"/>
</dbReference>
<dbReference type="PROSITE" id="PS50159">
    <property type="entry name" value="RIBOSOMAL_S13_2"/>
    <property type="match status" value="1"/>
</dbReference>
<accession>P0A7S9</accession>
<accession>P02369</accession>
<accession>Q2M6W3</accession>
<comment type="function">
    <text evidence="6">Located at the top of the head of the 30S subunit, it contacts several helices of the 16S rRNA.</text>
</comment>
<comment type="function">
    <text evidence="4 5 6 7">In the E.coli 70S ribosome in the initiation state (PubMed:12809609) was modeled to contact the 23S rRNA (bridge B1a) and protein L5 of the 50S subunit (bridge B1b), connecting the 2 subunits; bridge B1a is broken in the model with bound EF-G, while the protein-protein contacts between S13 and L5 in B1b change (PubMed:12809609). The 23S rRNA contact site in bridge B1a is modeled to differ in different ribosomal states (PubMed:16272117), contacting alternately S13 or S19. In the two 3.5 angstroms resolved ribosome structures (PubMed:12859903) the contacts between L5, S13 and S19 bridge B1b are different, confirming the dynamic nature of this interaction. Bridge B1a is not visible in the crystallized ribosomes due to 23S rRNA disorder.</text>
</comment>
<comment type="function">
    <text evidence="6">Contacts the tRNAs in the A and P sites.</text>
</comment>
<comment type="function">
    <text evidence="6">The C-terminal tail plays a role in the affinity of the 30S P site for different tRNAs.</text>
</comment>
<comment type="subunit">
    <text evidence="2 3 4 5 7 8 9 10 11 12 14">Part of the 30S ribosomal subunit (PubMed:10094780, PubMed:12244297, PubMed:12809609, PubMed:12859903, PubMed:16272117, PubMed:27906160, PubMed:27906161, PubMed:27934701, PubMed:3279034, PubMed:330375). Forms a loose heterodimer with protein S19 (PubMed:3279034). Cross-links to the P site tRNA and weakly to the A site tRNA (PubMed:8524654). Forms two bridges to the 50S subunit in the 70S ribosome, contacting the 16S rRNA and proteins S19 and L5 (PubMed:12809609, PubMed:12859903, PubMed:16272117).</text>
</comment>
<comment type="mass spectrometry"/>
<comment type="similarity">
    <text evidence="17">Belongs to the universal ribosomal protein uS13 family.</text>
</comment>
<organism>
    <name type="scientific">Escherichia coli (strain K12)</name>
    <dbReference type="NCBI Taxonomy" id="83333"/>
    <lineage>
        <taxon>Bacteria</taxon>
        <taxon>Pseudomonadati</taxon>
        <taxon>Pseudomonadota</taxon>
        <taxon>Gammaproteobacteria</taxon>
        <taxon>Enterobacterales</taxon>
        <taxon>Enterobacteriaceae</taxon>
        <taxon>Escherichia</taxon>
    </lineage>
</organism>